<dbReference type="EC" id="3.4.24.56" evidence="5 6 13 14"/>
<dbReference type="EMBL" id="M21188">
    <property type="protein sequence ID" value="AAA52712.1"/>
    <property type="molecule type" value="mRNA"/>
</dbReference>
<dbReference type="EMBL" id="AK312810">
    <property type="protein sequence ID" value="BAG35668.1"/>
    <property type="molecule type" value="mRNA"/>
</dbReference>
<dbReference type="EMBL" id="AK316407">
    <property type="protein sequence ID" value="BAH14778.1"/>
    <property type="molecule type" value="mRNA"/>
</dbReference>
<dbReference type="EMBL" id="AL356128">
    <property type="status" value="NOT_ANNOTATED_CDS"/>
    <property type="molecule type" value="Genomic_DNA"/>
</dbReference>
<dbReference type="EMBL" id="CH471066">
    <property type="protein sequence ID" value="EAW50090.1"/>
    <property type="molecule type" value="Genomic_DNA"/>
</dbReference>
<dbReference type="EMBL" id="CH471066">
    <property type="protein sequence ID" value="EAW50091.1"/>
    <property type="molecule type" value="Genomic_DNA"/>
</dbReference>
<dbReference type="EMBL" id="BC096336">
    <property type="protein sequence ID" value="AAH96336.1"/>
    <property type="molecule type" value="mRNA"/>
</dbReference>
<dbReference type="EMBL" id="BC096337">
    <property type="protein sequence ID" value="AAH96337.1"/>
    <property type="molecule type" value="mRNA"/>
</dbReference>
<dbReference type="EMBL" id="BC096339">
    <property type="protein sequence ID" value="AAH96339.1"/>
    <property type="molecule type" value="mRNA"/>
</dbReference>
<dbReference type="CCDS" id="CCDS53554.1">
    <molecule id="P14735-2"/>
</dbReference>
<dbReference type="CCDS" id="CCDS7421.1">
    <molecule id="P14735-1"/>
</dbReference>
<dbReference type="PIR" id="A40119">
    <property type="entry name" value="SNHUIN"/>
</dbReference>
<dbReference type="RefSeq" id="NP_001159418.1">
    <molecule id="P14735-2"/>
    <property type="nucleotide sequence ID" value="NM_001165946.2"/>
</dbReference>
<dbReference type="RefSeq" id="NP_004960.2">
    <molecule id="P14735-1"/>
    <property type="nucleotide sequence ID" value="NM_004969.4"/>
</dbReference>
<dbReference type="PDB" id="2G47">
    <property type="method" value="X-ray"/>
    <property type="resolution" value="2.10 A"/>
    <property type="chains" value="A/B=42-1019"/>
</dbReference>
<dbReference type="PDB" id="2G48">
    <property type="method" value="X-ray"/>
    <property type="resolution" value="2.60 A"/>
    <property type="chains" value="A/B=42-1019"/>
</dbReference>
<dbReference type="PDB" id="2G49">
    <property type="method" value="X-ray"/>
    <property type="resolution" value="2.50 A"/>
    <property type="chains" value="A/B=42-1019"/>
</dbReference>
<dbReference type="PDB" id="2G54">
    <property type="method" value="X-ray"/>
    <property type="resolution" value="2.25 A"/>
    <property type="chains" value="A/B=42-1019"/>
</dbReference>
<dbReference type="PDB" id="2G56">
    <property type="method" value="X-ray"/>
    <property type="resolution" value="2.20 A"/>
    <property type="chains" value="A/B=42-1019"/>
</dbReference>
<dbReference type="PDB" id="2JBU">
    <property type="method" value="X-ray"/>
    <property type="resolution" value="3.00 A"/>
    <property type="chains" value="A/B=42-1019"/>
</dbReference>
<dbReference type="PDB" id="2JG4">
    <property type="method" value="X-ray"/>
    <property type="resolution" value="2.80 A"/>
    <property type="chains" value="A/B=43-1019"/>
</dbReference>
<dbReference type="PDB" id="2WBY">
    <property type="method" value="X-ray"/>
    <property type="resolution" value="2.60 A"/>
    <property type="chains" value="A/B=42-1019"/>
</dbReference>
<dbReference type="PDB" id="2WC0">
    <property type="method" value="X-ray"/>
    <property type="resolution" value="2.80 A"/>
    <property type="chains" value="A/B=42-1019"/>
</dbReference>
<dbReference type="PDB" id="2WK3">
    <property type="method" value="X-ray"/>
    <property type="resolution" value="2.59 A"/>
    <property type="chains" value="A/B=1-1019"/>
</dbReference>
<dbReference type="PDB" id="2YPU">
    <property type="method" value="X-ray"/>
    <property type="resolution" value="2.80 A"/>
    <property type="chains" value="A/B=42-1019"/>
</dbReference>
<dbReference type="PDB" id="3CWW">
    <property type="method" value="X-ray"/>
    <property type="resolution" value="1.96 A"/>
    <property type="chains" value="A/B=42-1019"/>
</dbReference>
<dbReference type="PDB" id="3E4A">
    <property type="method" value="X-ray"/>
    <property type="resolution" value="2.60 A"/>
    <property type="chains" value="A/B=1-1019"/>
</dbReference>
<dbReference type="PDB" id="3E4Z">
    <property type="method" value="X-ray"/>
    <property type="resolution" value="2.28 A"/>
    <property type="chains" value="A/B=42-1019"/>
</dbReference>
<dbReference type="PDB" id="3E50">
    <property type="method" value="X-ray"/>
    <property type="resolution" value="2.30 A"/>
    <property type="chains" value="A/B=42-1019"/>
</dbReference>
<dbReference type="PDB" id="3H44">
    <property type="method" value="X-ray"/>
    <property type="resolution" value="3.00 A"/>
    <property type="chains" value="A/B=42-1019"/>
</dbReference>
<dbReference type="PDB" id="3HGZ">
    <property type="method" value="X-ray"/>
    <property type="resolution" value="2.91 A"/>
    <property type="chains" value="A/B=43-1011"/>
</dbReference>
<dbReference type="PDB" id="3N56">
    <property type="method" value="X-ray"/>
    <property type="resolution" value="3.10 A"/>
    <property type="chains" value="A/B=42-1019"/>
</dbReference>
<dbReference type="PDB" id="3N57">
    <property type="method" value="X-ray"/>
    <property type="resolution" value="3.03 A"/>
    <property type="chains" value="A/B=42-1019"/>
</dbReference>
<dbReference type="PDB" id="3OFI">
    <property type="method" value="X-ray"/>
    <property type="resolution" value="2.35 A"/>
    <property type="chains" value="A/B=42-1019"/>
</dbReference>
<dbReference type="PDB" id="3QZ2">
    <property type="method" value="X-ray"/>
    <property type="resolution" value="3.20 A"/>
    <property type="chains" value="A/B=42-1019"/>
</dbReference>
<dbReference type="PDB" id="4DTT">
    <property type="method" value="X-ray"/>
    <property type="resolution" value="3.22 A"/>
    <property type="chains" value="A/B=42-1019"/>
</dbReference>
<dbReference type="PDB" id="4DWK">
    <property type="method" value="X-ray"/>
    <property type="resolution" value="3.00 A"/>
    <property type="chains" value="A/B=42-1019"/>
</dbReference>
<dbReference type="PDB" id="4GS8">
    <property type="method" value="X-ray"/>
    <property type="resolution" value="2.99 A"/>
    <property type="chains" value="A/B=42-1019"/>
</dbReference>
<dbReference type="PDB" id="4GSC">
    <property type="method" value="X-ray"/>
    <property type="resolution" value="2.81 A"/>
    <property type="chains" value="A/B=42-1019"/>
</dbReference>
<dbReference type="PDB" id="4GSF">
    <property type="method" value="X-ray"/>
    <property type="resolution" value="2.70 A"/>
    <property type="chains" value="A/B=42-1019"/>
</dbReference>
<dbReference type="PDB" id="4IFH">
    <property type="method" value="X-ray"/>
    <property type="resolution" value="3.29 A"/>
    <property type="chains" value="A/B=42-1019"/>
</dbReference>
<dbReference type="PDB" id="4IOF">
    <property type="method" value="X-ray"/>
    <property type="resolution" value="3.35 A"/>
    <property type="chains" value="A/B=42-1019"/>
</dbReference>
<dbReference type="PDB" id="4LTE">
    <property type="method" value="X-ray"/>
    <property type="resolution" value="2.70 A"/>
    <property type="chains" value="A/B=42-1019"/>
</dbReference>
<dbReference type="PDB" id="4M1C">
    <property type="method" value="X-ray"/>
    <property type="resolution" value="3.50 A"/>
    <property type="chains" value="A/B=42-1019"/>
</dbReference>
<dbReference type="PDB" id="4NXO">
    <property type="method" value="X-ray"/>
    <property type="resolution" value="2.73 A"/>
    <property type="chains" value="A/B=42-1019"/>
</dbReference>
<dbReference type="PDB" id="4PES">
    <property type="method" value="X-ray"/>
    <property type="resolution" value="2.21 A"/>
    <property type="chains" value="A/B=42-1019"/>
</dbReference>
<dbReference type="PDB" id="4PF7">
    <property type="method" value="X-ray"/>
    <property type="resolution" value="2.33 A"/>
    <property type="chains" value="A/B=42-1019"/>
</dbReference>
<dbReference type="PDB" id="4PF9">
    <property type="method" value="X-ray"/>
    <property type="resolution" value="2.50 A"/>
    <property type="chains" value="A/B=42-1019"/>
</dbReference>
<dbReference type="PDB" id="4PFC">
    <property type="method" value="X-ray"/>
    <property type="resolution" value="2.21 A"/>
    <property type="chains" value="A/B=42-1019"/>
</dbReference>
<dbReference type="PDB" id="4QIA">
    <property type="method" value="X-ray"/>
    <property type="resolution" value="3.20 A"/>
    <property type="chains" value="A/B=42-1019"/>
</dbReference>
<dbReference type="PDB" id="4RAL">
    <property type="method" value="X-ray"/>
    <property type="resolution" value="3.15 A"/>
    <property type="chains" value="A/B=42-1019"/>
</dbReference>
<dbReference type="PDB" id="4RE9">
    <property type="method" value="X-ray"/>
    <property type="resolution" value="2.91 A"/>
    <property type="chains" value="A/B=42-1019"/>
</dbReference>
<dbReference type="PDB" id="5CJO">
    <property type="method" value="X-ray"/>
    <property type="resolution" value="3.29 A"/>
    <property type="chains" value="A=42-1019"/>
</dbReference>
<dbReference type="PDB" id="5UOE">
    <property type="method" value="X-ray"/>
    <property type="resolution" value="3.80 A"/>
    <property type="chains" value="A/B/C/D/E=42-1019"/>
</dbReference>
<dbReference type="PDB" id="5WOB">
    <property type="method" value="X-ray"/>
    <property type="resolution" value="3.95 A"/>
    <property type="chains" value="A/B/C/D/E/F/G/H=42-1019"/>
</dbReference>
<dbReference type="PDB" id="6B3Q">
    <property type="method" value="EM"/>
    <property type="resolution" value="3.70 A"/>
    <property type="chains" value="A/B=42-1019"/>
</dbReference>
<dbReference type="PDB" id="6B70">
    <property type="method" value="EM"/>
    <property type="resolution" value="3.70 A"/>
    <property type="chains" value="A/B=46-1011"/>
</dbReference>
<dbReference type="PDB" id="6B7Y">
    <property type="method" value="EM"/>
    <property type="resolution" value="6.50 A"/>
    <property type="chains" value="A/B=46-1011"/>
</dbReference>
<dbReference type="PDB" id="6B7Z">
    <property type="method" value="EM"/>
    <property type="resolution" value="6.50 A"/>
    <property type="chains" value="A/B=46-1011"/>
</dbReference>
<dbReference type="PDB" id="6BF6">
    <property type="method" value="EM"/>
    <property type="resolution" value="6.50 A"/>
    <property type="chains" value="A/B=46-1011"/>
</dbReference>
<dbReference type="PDB" id="6BF7">
    <property type="method" value="EM"/>
    <property type="resolution" value="6.50 A"/>
    <property type="chains" value="A/B=46-1011"/>
</dbReference>
<dbReference type="PDB" id="6BF8">
    <property type="method" value="EM"/>
    <property type="resolution" value="4.20 A"/>
    <property type="chains" value="A/B=46-1011"/>
</dbReference>
<dbReference type="PDB" id="6BF9">
    <property type="method" value="EM"/>
    <property type="resolution" value="7.20 A"/>
    <property type="chains" value="A/B=46-1011"/>
</dbReference>
<dbReference type="PDB" id="6BFC">
    <property type="method" value="EM"/>
    <property type="resolution" value="3.70 A"/>
    <property type="chains" value="A/B=46-1011"/>
</dbReference>
<dbReference type="PDB" id="6BYZ">
    <property type="method" value="X-ray"/>
    <property type="resolution" value="2.96 A"/>
    <property type="chains" value="A/B=1-1019"/>
</dbReference>
<dbReference type="PDB" id="6EDS">
    <property type="method" value="X-ray"/>
    <property type="resolution" value="3.18 A"/>
    <property type="chains" value="A/B=42-1019"/>
</dbReference>
<dbReference type="PDB" id="6MQ3">
    <property type="method" value="X-ray"/>
    <property type="resolution" value="3.57 A"/>
    <property type="chains" value="A/B=42-1019"/>
</dbReference>
<dbReference type="PDB" id="7K1D">
    <property type="method" value="X-ray"/>
    <property type="resolution" value="3.00 A"/>
    <property type="chains" value="A/B=42-1019"/>
</dbReference>
<dbReference type="PDB" id="7K1E">
    <property type="method" value="X-ray"/>
    <property type="resolution" value="2.80 A"/>
    <property type="chains" value="A/B=42-1019"/>
</dbReference>
<dbReference type="PDB" id="7K1F">
    <property type="method" value="X-ray"/>
    <property type="resolution" value="2.60 A"/>
    <property type="chains" value="A/B=42-1019"/>
</dbReference>
<dbReference type="PDB" id="7RZE">
    <property type="method" value="EM"/>
    <property type="resolution" value="3.30 A"/>
    <property type="chains" value="A/B=1-1011"/>
</dbReference>
<dbReference type="PDB" id="7RZF">
    <property type="method" value="EM"/>
    <property type="resolution" value="3.40 A"/>
    <property type="chains" value="A/B=1-1011"/>
</dbReference>
<dbReference type="PDB" id="7RZG">
    <property type="method" value="EM"/>
    <property type="resolution" value="4.10 A"/>
    <property type="chains" value="A/B=1-1011"/>
</dbReference>
<dbReference type="PDB" id="7RZH">
    <property type="method" value="EM"/>
    <property type="resolution" value="3.80 A"/>
    <property type="chains" value="A/B=1-1011"/>
</dbReference>
<dbReference type="PDB" id="7RZI">
    <property type="method" value="EM"/>
    <property type="resolution" value="3.00 A"/>
    <property type="chains" value="A/B=1-1011"/>
</dbReference>
<dbReference type="PDBsum" id="2G47"/>
<dbReference type="PDBsum" id="2G48"/>
<dbReference type="PDBsum" id="2G49"/>
<dbReference type="PDBsum" id="2G54"/>
<dbReference type="PDBsum" id="2G56"/>
<dbReference type="PDBsum" id="2JBU"/>
<dbReference type="PDBsum" id="2JG4"/>
<dbReference type="PDBsum" id="2WBY"/>
<dbReference type="PDBsum" id="2WC0"/>
<dbReference type="PDBsum" id="2WK3"/>
<dbReference type="PDBsum" id="2YPU"/>
<dbReference type="PDBsum" id="3CWW"/>
<dbReference type="PDBsum" id="3E4A"/>
<dbReference type="PDBsum" id="3E4Z"/>
<dbReference type="PDBsum" id="3E50"/>
<dbReference type="PDBsum" id="3H44"/>
<dbReference type="PDBsum" id="3HGZ"/>
<dbReference type="PDBsum" id="3N56"/>
<dbReference type="PDBsum" id="3N57"/>
<dbReference type="PDBsum" id="3OFI"/>
<dbReference type="PDBsum" id="3QZ2"/>
<dbReference type="PDBsum" id="4DTT"/>
<dbReference type="PDBsum" id="4DWK"/>
<dbReference type="PDBsum" id="4GS8"/>
<dbReference type="PDBsum" id="4GSC"/>
<dbReference type="PDBsum" id="4GSF"/>
<dbReference type="PDBsum" id="4IFH"/>
<dbReference type="PDBsum" id="4IOF"/>
<dbReference type="PDBsum" id="4LTE"/>
<dbReference type="PDBsum" id="4M1C"/>
<dbReference type="PDBsum" id="4NXO"/>
<dbReference type="PDBsum" id="4PES"/>
<dbReference type="PDBsum" id="4PF7"/>
<dbReference type="PDBsum" id="4PF9"/>
<dbReference type="PDBsum" id="4PFC"/>
<dbReference type="PDBsum" id="4QIA"/>
<dbReference type="PDBsum" id="4RAL"/>
<dbReference type="PDBsum" id="4RE9"/>
<dbReference type="PDBsum" id="5CJO"/>
<dbReference type="PDBsum" id="5UOE"/>
<dbReference type="PDBsum" id="5WOB"/>
<dbReference type="PDBsum" id="6B3Q"/>
<dbReference type="PDBsum" id="6B70"/>
<dbReference type="PDBsum" id="6B7Y"/>
<dbReference type="PDBsum" id="6B7Z"/>
<dbReference type="PDBsum" id="6BF6"/>
<dbReference type="PDBsum" id="6BF7"/>
<dbReference type="PDBsum" id="6BF8"/>
<dbReference type="PDBsum" id="6BF9"/>
<dbReference type="PDBsum" id="6BFC"/>
<dbReference type="PDBsum" id="6BYZ"/>
<dbReference type="PDBsum" id="6EDS"/>
<dbReference type="PDBsum" id="6MQ3"/>
<dbReference type="PDBsum" id="7K1D"/>
<dbReference type="PDBsum" id="7K1E"/>
<dbReference type="PDBsum" id="7K1F"/>
<dbReference type="PDBsum" id="7RZE"/>
<dbReference type="PDBsum" id="7RZF"/>
<dbReference type="PDBsum" id="7RZG"/>
<dbReference type="PDBsum" id="7RZH"/>
<dbReference type="PDBsum" id="7RZI"/>
<dbReference type="EMDB" id="EMD-24757"/>
<dbReference type="EMDB" id="EMD-24758"/>
<dbReference type="EMDB" id="EMD-24759"/>
<dbReference type="EMDB" id="EMD-24760"/>
<dbReference type="EMDB" id="EMD-24761"/>
<dbReference type="EMDB" id="EMD-7041"/>
<dbReference type="EMDB" id="EMD-7062"/>
<dbReference type="EMDB" id="EMD-7065"/>
<dbReference type="EMDB" id="EMD-7066"/>
<dbReference type="EMDB" id="EMD-7090"/>
<dbReference type="EMDB" id="EMD-7091"/>
<dbReference type="EMDB" id="EMD-7092"/>
<dbReference type="EMDB" id="EMD-7093"/>
<dbReference type="SMR" id="P14735"/>
<dbReference type="BioGRID" id="109642">
    <property type="interactions" value="219"/>
</dbReference>
<dbReference type="DIP" id="DIP-55771N"/>
<dbReference type="FunCoup" id="P14735">
    <property type="interactions" value="2835"/>
</dbReference>
<dbReference type="IntAct" id="P14735">
    <property type="interactions" value="119"/>
</dbReference>
<dbReference type="MINT" id="P14735"/>
<dbReference type="STRING" id="9606.ENSP00000265986"/>
<dbReference type="BindingDB" id="P14735"/>
<dbReference type="ChEMBL" id="CHEMBL1293287"/>
<dbReference type="DrugBank" id="DB00626">
    <property type="generic name" value="Bacitracin"/>
</dbReference>
<dbReference type="DrugBank" id="DB09456">
    <property type="generic name" value="Insulin beef"/>
</dbReference>
<dbReference type="DrugBank" id="DB09564">
    <property type="generic name" value="Insulin degludec"/>
</dbReference>
<dbReference type="DrugBank" id="DB01307">
    <property type="generic name" value="Insulin detemir"/>
</dbReference>
<dbReference type="DrugBank" id="DB00030">
    <property type="generic name" value="Insulin human"/>
</dbReference>
<dbReference type="DrugBank" id="DB16693">
    <property type="generic name" value="Insulin icodec"/>
</dbReference>
<dbReference type="DrugBank" id="DB00046">
    <property type="generic name" value="Insulin lispro"/>
</dbReference>
<dbReference type="DrugBank" id="DB00071">
    <property type="generic name" value="Insulin pork"/>
</dbReference>
<dbReference type="DrugBank" id="DB14487">
    <property type="generic name" value="Zinc acetate"/>
</dbReference>
<dbReference type="DrugBank" id="DB14533">
    <property type="generic name" value="Zinc chloride"/>
</dbReference>
<dbReference type="DrugBank" id="DB14548">
    <property type="generic name" value="Zinc sulfate, unspecified form"/>
</dbReference>
<dbReference type="DrugCentral" id="P14735"/>
<dbReference type="GuidetoPHARMACOLOGY" id="2371"/>
<dbReference type="MEROPS" id="M16.002"/>
<dbReference type="MEROPS" id="M16.982"/>
<dbReference type="MEROPS" id="M16.984"/>
<dbReference type="GlyGen" id="P14735">
    <property type="glycosylation" value="1 site, 1 O-linked glycan (1 site)"/>
</dbReference>
<dbReference type="iPTMnet" id="P14735"/>
<dbReference type="MetOSite" id="P14735"/>
<dbReference type="PhosphoSitePlus" id="P14735"/>
<dbReference type="BioMuta" id="IDE"/>
<dbReference type="DMDM" id="215274252"/>
<dbReference type="jPOST" id="P14735"/>
<dbReference type="MassIVE" id="P14735"/>
<dbReference type="PaxDb" id="9606-ENSP00000265986"/>
<dbReference type="PeptideAtlas" id="P14735"/>
<dbReference type="ProteomicsDB" id="53079">
    <molecule id="P14735-1"/>
</dbReference>
<dbReference type="ProteomicsDB" id="7086"/>
<dbReference type="Pumba" id="P14735"/>
<dbReference type="ABCD" id="P14735">
    <property type="antibodies" value="3 sequenced antibodies"/>
</dbReference>
<dbReference type="Antibodypedia" id="3227">
    <property type="antibodies" value="531 antibodies from 45 providers"/>
</dbReference>
<dbReference type="DNASU" id="3416"/>
<dbReference type="Ensembl" id="ENST00000265986.11">
    <molecule id="P14735-1"/>
    <property type="protein sequence ID" value="ENSP00000265986.6"/>
    <property type="gene ID" value="ENSG00000119912.18"/>
</dbReference>
<dbReference type="Ensembl" id="ENST00000371581.9">
    <molecule id="P14735-2"/>
    <property type="protein sequence ID" value="ENSP00000360637.5"/>
    <property type="gene ID" value="ENSG00000119912.18"/>
</dbReference>
<dbReference type="GeneID" id="3416"/>
<dbReference type="KEGG" id="hsa:3416"/>
<dbReference type="MANE-Select" id="ENST00000265986.11">
    <property type="protein sequence ID" value="ENSP00000265986.6"/>
    <property type="RefSeq nucleotide sequence ID" value="NM_004969.4"/>
    <property type="RefSeq protein sequence ID" value="NP_004960.2"/>
</dbReference>
<dbReference type="UCSC" id="uc001kia.4">
    <molecule id="P14735-1"/>
    <property type="organism name" value="human"/>
</dbReference>
<dbReference type="AGR" id="HGNC:5381"/>
<dbReference type="CTD" id="3416"/>
<dbReference type="DisGeNET" id="3416"/>
<dbReference type="GeneCards" id="IDE"/>
<dbReference type="HGNC" id="HGNC:5381">
    <property type="gene designation" value="IDE"/>
</dbReference>
<dbReference type="HPA" id="ENSG00000119912">
    <property type="expression patterns" value="Low tissue specificity"/>
</dbReference>
<dbReference type="MIM" id="146680">
    <property type="type" value="gene"/>
</dbReference>
<dbReference type="neXtProt" id="NX_P14735"/>
<dbReference type="OpenTargets" id="ENSG00000119912"/>
<dbReference type="PharmGKB" id="PA29629"/>
<dbReference type="VEuPathDB" id="HostDB:ENSG00000119912"/>
<dbReference type="eggNOG" id="KOG0959">
    <property type="taxonomic scope" value="Eukaryota"/>
</dbReference>
<dbReference type="GeneTree" id="ENSGT00940000155780"/>
<dbReference type="HOGENOM" id="CLU_004639_1_1_1"/>
<dbReference type="InParanoid" id="P14735"/>
<dbReference type="OMA" id="WIFDEMK"/>
<dbReference type="OrthoDB" id="952271at2759"/>
<dbReference type="PAN-GO" id="P14735">
    <property type="GO annotations" value="8 GO annotations based on evolutionary models"/>
</dbReference>
<dbReference type="PhylomeDB" id="P14735"/>
<dbReference type="TreeFam" id="TF106275"/>
<dbReference type="BRENDA" id="3.4.24.56">
    <property type="organism ID" value="2681"/>
</dbReference>
<dbReference type="PathwayCommons" id="P14735"/>
<dbReference type="Reactome" id="R-HSA-5689880">
    <property type="pathway name" value="Ub-specific processing proteases"/>
</dbReference>
<dbReference type="Reactome" id="R-HSA-77387">
    <property type="pathway name" value="Insulin receptor recycling"/>
</dbReference>
<dbReference type="Reactome" id="R-HSA-9033241">
    <property type="pathway name" value="Peroxisomal protein import"/>
</dbReference>
<dbReference type="SignaLink" id="P14735"/>
<dbReference type="SIGNOR" id="P14735"/>
<dbReference type="BioGRID-ORCS" id="3416">
    <property type="hits" value="16 hits in 1175 CRISPR screens"/>
</dbReference>
<dbReference type="ChiTaRS" id="IDE">
    <property type="organism name" value="human"/>
</dbReference>
<dbReference type="EvolutionaryTrace" id="P14735"/>
<dbReference type="GeneWiki" id="Insulin-degrading_enzyme"/>
<dbReference type="GenomeRNAi" id="3416"/>
<dbReference type="Pharos" id="P14735">
    <property type="development level" value="Tchem"/>
</dbReference>
<dbReference type="PRO" id="PR:P14735"/>
<dbReference type="Proteomes" id="UP000005640">
    <property type="component" value="Chromosome 10"/>
</dbReference>
<dbReference type="RNAct" id="P14735">
    <property type="molecule type" value="protein"/>
</dbReference>
<dbReference type="Bgee" id="ENSG00000119912">
    <property type="expression patterns" value="Expressed in upper leg skin and 204 other cell types or tissues"/>
</dbReference>
<dbReference type="ExpressionAtlas" id="P14735">
    <property type="expression patterns" value="baseline and differential"/>
</dbReference>
<dbReference type="GO" id="GO:0016323">
    <property type="term" value="C:basolateral plasma membrane"/>
    <property type="evidence" value="ECO:0000315"/>
    <property type="project" value="ARUK-UCL"/>
</dbReference>
<dbReference type="GO" id="GO:0009986">
    <property type="term" value="C:cell surface"/>
    <property type="evidence" value="ECO:0000314"/>
    <property type="project" value="UniProtKB"/>
</dbReference>
<dbReference type="GO" id="GO:0005737">
    <property type="term" value="C:cytoplasm"/>
    <property type="evidence" value="ECO:0000314"/>
    <property type="project" value="UniProtKB"/>
</dbReference>
<dbReference type="GO" id="GO:0005829">
    <property type="term" value="C:cytosol"/>
    <property type="evidence" value="ECO:0000314"/>
    <property type="project" value="UniProtKB"/>
</dbReference>
<dbReference type="GO" id="GO:0031597">
    <property type="term" value="C:cytosolic proteasome complex"/>
    <property type="evidence" value="ECO:0007669"/>
    <property type="project" value="Ensembl"/>
</dbReference>
<dbReference type="GO" id="GO:0009897">
    <property type="term" value="C:external side of plasma membrane"/>
    <property type="evidence" value="ECO:0000314"/>
    <property type="project" value="ARUK-UCL"/>
</dbReference>
<dbReference type="GO" id="GO:0070062">
    <property type="term" value="C:extracellular exosome"/>
    <property type="evidence" value="ECO:0000250"/>
    <property type="project" value="ARUK-UCL"/>
</dbReference>
<dbReference type="GO" id="GO:0005615">
    <property type="term" value="C:extracellular space"/>
    <property type="evidence" value="ECO:0000314"/>
    <property type="project" value="UniProtKB"/>
</dbReference>
<dbReference type="GO" id="GO:0005739">
    <property type="term" value="C:mitochondrion"/>
    <property type="evidence" value="ECO:0000314"/>
    <property type="project" value="UniProtKB"/>
</dbReference>
<dbReference type="GO" id="GO:0005634">
    <property type="term" value="C:nucleus"/>
    <property type="evidence" value="ECO:0000314"/>
    <property type="project" value="UniProtKB"/>
</dbReference>
<dbReference type="GO" id="GO:0005782">
    <property type="term" value="C:peroxisomal matrix"/>
    <property type="evidence" value="ECO:0000318"/>
    <property type="project" value="GO_Central"/>
</dbReference>
<dbReference type="GO" id="GO:0005777">
    <property type="term" value="C:peroxisome"/>
    <property type="evidence" value="ECO:0000314"/>
    <property type="project" value="UniProtKB"/>
</dbReference>
<dbReference type="GO" id="GO:0001540">
    <property type="term" value="F:amyloid-beta binding"/>
    <property type="evidence" value="ECO:0007669"/>
    <property type="project" value="Ensembl"/>
</dbReference>
<dbReference type="GO" id="GO:0005524">
    <property type="term" value="F:ATP binding"/>
    <property type="evidence" value="ECO:0000314"/>
    <property type="project" value="UniProtKB"/>
</dbReference>
<dbReference type="GO" id="GO:0016887">
    <property type="term" value="F:ATP hydrolysis activity"/>
    <property type="evidence" value="ECO:0007669"/>
    <property type="project" value="Ensembl"/>
</dbReference>
<dbReference type="GO" id="GO:0031626">
    <property type="term" value="F:beta-endorphin binding"/>
    <property type="evidence" value="ECO:0007669"/>
    <property type="project" value="Ensembl"/>
</dbReference>
<dbReference type="GO" id="GO:0004175">
    <property type="term" value="F:endopeptidase activity"/>
    <property type="evidence" value="ECO:0000314"/>
    <property type="project" value="UniProtKB"/>
</dbReference>
<dbReference type="GO" id="GO:0042802">
    <property type="term" value="F:identical protein binding"/>
    <property type="evidence" value="ECO:0000353"/>
    <property type="project" value="IntAct"/>
</dbReference>
<dbReference type="GO" id="GO:0043559">
    <property type="term" value="F:insulin binding"/>
    <property type="evidence" value="ECO:0000314"/>
    <property type="project" value="UniProtKB"/>
</dbReference>
<dbReference type="GO" id="GO:0004222">
    <property type="term" value="F:metalloendopeptidase activity"/>
    <property type="evidence" value="ECO:0000314"/>
    <property type="project" value="UniProtKB"/>
</dbReference>
<dbReference type="GO" id="GO:0042277">
    <property type="term" value="F:peptide binding"/>
    <property type="evidence" value="ECO:0000353"/>
    <property type="project" value="UniProtKB"/>
</dbReference>
<dbReference type="GO" id="GO:0042803">
    <property type="term" value="F:protein homodimerization activity"/>
    <property type="evidence" value="ECO:0000314"/>
    <property type="project" value="UniProtKB"/>
</dbReference>
<dbReference type="GO" id="GO:0044877">
    <property type="term" value="F:protein-containing complex binding"/>
    <property type="evidence" value="ECO:0007669"/>
    <property type="project" value="Ensembl"/>
</dbReference>
<dbReference type="GO" id="GO:0001618">
    <property type="term" value="F:virus receptor activity"/>
    <property type="evidence" value="ECO:0007669"/>
    <property type="project" value="UniProtKB-KW"/>
</dbReference>
<dbReference type="GO" id="GO:0008270">
    <property type="term" value="F:zinc ion binding"/>
    <property type="evidence" value="ECO:0000314"/>
    <property type="project" value="UniProtKB"/>
</dbReference>
<dbReference type="GO" id="GO:0097242">
    <property type="term" value="P:amyloid-beta clearance"/>
    <property type="evidence" value="ECO:0000315"/>
    <property type="project" value="ARUK-UCL"/>
</dbReference>
<dbReference type="GO" id="GO:0150094">
    <property type="term" value="P:amyloid-beta clearance by cellular catabolic process"/>
    <property type="evidence" value="ECO:0000315"/>
    <property type="project" value="ARUK-UCL"/>
</dbReference>
<dbReference type="GO" id="GO:0050435">
    <property type="term" value="P:amyloid-beta metabolic process"/>
    <property type="evidence" value="ECO:0000314"/>
    <property type="project" value="UniProtKB"/>
</dbReference>
<dbReference type="GO" id="GO:0019885">
    <property type="term" value="P:antigen processing and presentation of endogenous peptide antigen via MHC class I"/>
    <property type="evidence" value="ECO:0000315"/>
    <property type="project" value="UniProtKB"/>
</dbReference>
<dbReference type="GO" id="GO:0010815">
    <property type="term" value="P:bradykinin catabolic process"/>
    <property type="evidence" value="ECO:0000314"/>
    <property type="project" value="UniProtKB"/>
</dbReference>
<dbReference type="GO" id="GO:0042447">
    <property type="term" value="P:hormone catabolic process"/>
    <property type="evidence" value="ECO:0000314"/>
    <property type="project" value="UniProtKB"/>
</dbReference>
<dbReference type="GO" id="GO:1901143">
    <property type="term" value="P:insulin catabolic process"/>
    <property type="evidence" value="ECO:0000314"/>
    <property type="project" value="UniProtKB"/>
</dbReference>
<dbReference type="GO" id="GO:1901142">
    <property type="term" value="P:insulin metabolic process"/>
    <property type="evidence" value="ECO:0000314"/>
    <property type="project" value="UniProtKB"/>
</dbReference>
<dbReference type="GO" id="GO:0008286">
    <property type="term" value="P:insulin receptor signaling pathway"/>
    <property type="evidence" value="ECO:0000303"/>
    <property type="project" value="UniProtKB"/>
</dbReference>
<dbReference type="GO" id="GO:0045861">
    <property type="term" value="P:negative regulation of proteolysis"/>
    <property type="evidence" value="ECO:0007669"/>
    <property type="project" value="Ensembl"/>
</dbReference>
<dbReference type="GO" id="GO:0043171">
    <property type="term" value="P:peptide catabolic process"/>
    <property type="evidence" value="ECO:0000314"/>
    <property type="project" value="UniProtKB"/>
</dbReference>
<dbReference type="GO" id="GO:0032092">
    <property type="term" value="P:positive regulation of protein binding"/>
    <property type="evidence" value="ECO:0000314"/>
    <property type="project" value="UniProtKB"/>
</dbReference>
<dbReference type="GO" id="GO:0045732">
    <property type="term" value="P:positive regulation of protein catabolic process"/>
    <property type="evidence" value="ECO:0000304"/>
    <property type="project" value="ARUK-UCL"/>
</dbReference>
<dbReference type="GO" id="GO:0030163">
    <property type="term" value="P:protein catabolic process"/>
    <property type="evidence" value="ECO:0000315"/>
    <property type="project" value="UniProtKB"/>
</dbReference>
<dbReference type="GO" id="GO:0006508">
    <property type="term" value="P:proteolysis"/>
    <property type="evidence" value="ECO:0000314"/>
    <property type="project" value="UniProtKB"/>
</dbReference>
<dbReference type="GO" id="GO:0051603">
    <property type="term" value="P:proteolysis involved in protein catabolic process"/>
    <property type="evidence" value="ECO:0000314"/>
    <property type="project" value="UniProtKB"/>
</dbReference>
<dbReference type="GO" id="GO:1903715">
    <property type="term" value="P:regulation of aerobic respiration"/>
    <property type="evidence" value="ECO:0000316"/>
    <property type="project" value="ARUK-UCL"/>
</dbReference>
<dbReference type="GO" id="GO:0010992">
    <property type="term" value="P:ubiquitin recycling"/>
    <property type="evidence" value="ECO:0000314"/>
    <property type="project" value="UniProtKB"/>
</dbReference>
<dbReference type="FunFam" id="3.30.830.10:FF:000003">
    <property type="entry name" value="Insulin-degrading enzyme"/>
    <property type="match status" value="1"/>
</dbReference>
<dbReference type="FunFam" id="3.30.830.10:FF:000007">
    <property type="entry name" value="Insulin-degrading enzyme"/>
    <property type="match status" value="1"/>
</dbReference>
<dbReference type="FunFam" id="3.30.830.10:FF:000004">
    <property type="entry name" value="Putative insulin-degrading enzyme"/>
    <property type="match status" value="1"/>
</dbReference>
<dbReference type="FunFam" id="3.30.830.10:FF:000006">
    <property type="entry name" value="Putative insulin-degrading enzyme"/>
    <property type="match status" value="1"/>
</dbReference>
<dbReference type="Gene3D" id="3.30.830.10">
    <property type="entry name" value="Metalloenzyme, LuxS/M16 peptidase-like"/>
    <property type="match status" value="4"/>
</dbReference>
<dbReference type="InterPro" id="IPR011249">
    <property type="entry name" value="Metalloenz_LuxS/M16"/>
</dbReference>
<dbReference type="InterPro" id="IPR011765">
    <property type="entry name" value="Pept_M16_N"/>
</dbReference>
<dbReference type="InterPro" id="IPR001431">
    <property type="entry name" value="Pept_M16_Zn_BS"/>
</dbReference>
<dbReference type="InterPro" id="IPR050626">
    <property type="entry name" value="Peptidase_M16"/>
</dbReference>
<dbReference type="InterPro" id="IPR007863">
    <property type="entry name" value="Peptidase_M16_C"/>
</dbReference>
<dbReference type="InterPro" id="IPR032632">
    <property type="entry name" value="Peptidase_M16_M"/>
</dbReference>
<dbReference type="InterPro" id="IPR054734">
    <property type="entry name" value="PqqF-like_C_4"/>
</dbReference>
<dbReference type="PANTHER" id="PTHR43690:SF18">
    <property type="entry name" value="INSULIN-DEGRADING ENZYME-RELATED"/>
    <property type="match status" value="1"/>
</dbReference>
<dbReference type="PANTHER" id="PTHR43690">
    <property type="entry name" value="NARDILYSIN"/>
    <property type="match status" value="1"/>
</dbReference>
<dbReference type="Pfam" id="PF00675">
    <property type="entry name" value="Peptidase_M16"/>
    <property type="match status" value="1"/>
</dbReference>
<dbReference type="Pfam" id="PF05193">
    <property type="entry name" value="Peptidase_M16_C"/>
    <property type="match status" value="1"/>
</dbReference>
<dbReference type="Pfam" id="PF16187">
    <property type="entry name" value="Peptidase_M16_M"/>
    <property type="match status" value="1"/>
</dbReference>
<dbReference type="Pfam" id="PF22456">
    <property type="entry name" value="PqqF-like_C_4"/>
    <property type="match status" value="1"/>
</dbReference>
<dbReference type="SUPFAM" id="SSF63411">
    <property type="entry name" value="LuxS/MPP-like metallohydrolase"/>
    <property type="match status" value="4"/>
</dbReference>
<dbReference type="PROSITE" id="PS00143">
    <property type="entry name" value="INSULINASE"/>
    <property type="match status" value="1"/>
</dbReference>
<proteinExistence type="evidence at protein level"/>
<protein>
    <recommendedName>
        <fullName evidence="22">Insulin-degrading enzyme</fullName>
        <ecNumber evidence="5 6 13 14">3.4.24.56</ecNumber>
    </recommendedName>
    <alternativeName>
        <fullName>Abeta-degrading protease</fullName>
    </alternativeName>
    <alternativeName>
        <fullName evidence="22">Insulin protease</fullName>
        <shortName evidence="22">Insulinase</shortName>
    </alternativeName>
    <alternativeName>
        <fullName evidence="22">Insulysin</fullName>
    </alternativeName>
</protein>
<sequence length="1019" mass="117968">MRYRLAWLLHPALPSTFRSVLGARLPPPERLCGFQKKTYSKMNNPAIKRIGNHITKSPEDKREYRGLELANGIKVLLISDPTTDKSSAALDVHIGSLSDPPNIAGLSHFCEHMLFLGTKKYPKENEYSQFLSEHAGSSNAFTSGEHTNYYFDVSHEHLEGALDRFAQFFLCPLFDESCKDREVNAVDSEHEKNVMNDAWRLFQLEKATGNPKHPFSKFGTGNKYTLETRPNQEGIDVRQELLKFHSAYYSSNLMAVCVLGRESLDDLTNLVVKLFSEVENKNVPLPEFPEHPFQEEHLKQLYKIVPIKDIRNLYVTFPIPDLQKYYKSNPGHYLGHLIGHEGPGSLLSELKSKGWVNTLVGGQKEGARGFMFFIINVDLTEEGLLHVEDIILHMFQYIQKLRAEGPQEWVFQECKDLNAVAFRFKDKERPRGYTSKIAGILHYYPLEEVLTAEYLLEEFRPDLIEMVLDKLRPENVRVAIVSKSFEGKTDRTEEWYGTQYKQEAIPDEVIKKWQNADLNGKFKLPTKNEFIPTNFEILPLEKEATPYPALIKDTAMSKLWFKQDDKFFLPKACLNFEFFSPFAYVDPLHCNMAYLYLELLKDSLNEYAYAAELAGLSYDLQNTIYGMYLSVKGYNDKQPILLKKIIEKMATFEIDEKRFEIIKEAYMRSLNNFRAEQPHQHAMYYLRLLMTEVAWTKDELKEALDDVTLPRLKAFIPQLLSRLHIEALLHGNITKQAALGIMQMVEDTLIEHAHTKPLLPSQLVRYREVQLPDRGWFVYQQRNEVHNNCGIEIYYQTDMQSTSENMFLELFCQIISEPCFNTLRTKEQLGYIVFSGPRRANGIQGLRFIIQSEKPPHYLESRVEAFLITMEKSIEDMTEEAFQKHIQALAIRRLDKPKKLSAECAKYWGEIISQQYNFDRDNTEVAYLKTLTKEDIIKFYKEMLAVDAPRRHKVSVHVLAREMDSCPVVGEFPCQNDINLSQAPALPQPEVIQNMTEFKRGLPLFPLVKPHINFMAAKL</sequence>
<feature type="chain" id="PRO_0000074404" description="Insulin-degrading enzyme">
    <location>
        <begin position="1"/>
        <end position="1019"/>
    </location>
</feature>
<feature type="short sequence motif" description="SlyX motif" evidence="3">
    <location>
        <begin position="853"/>
        <end position="858"/>
    </location>
</feature>
<feature type="active site" description="Proton acceptor" evidence="4 24 25 27 28">
    <location>
        <position position="111"/>
    </location>
</feature>
<feature type="binding site" evidence="4 6 9 10 11 33 36 39 40 41">
    <location>
        <position position="108"/>
    </location>
    <ligand>
        <name>Zn(2+)</name>
        <dbReference type="ChEBI" id="CHEBI:29105"/>
    </ligand>
</feature>
<feature type="binding site" evidence="4 6 9 10 11 33 36 39 40 41">
    <location>
        <position position="112"/>
    </location>
    <ligand>
        <name>Zn(2+)</name>
        <dbReference type="ChEBI" id="CHEBI:29105"/>
    </ligand>
</feature>
<feature type="binding site" evidence="4 6 9 10 11 33 36 39 40 41">
    <location>
        <position position="189"/>
    </location>
    <ligand>
        <name>Zn(2+)</name>
        <dbReference type="ChEBI" id="CHEBI:29105"/>
    </ligand>
</feature>
<feature type="binding site" description="in the exosite">
    <location>
        <begin position="336"/>
        <end position="342"/>
    </location>
    <ligand>
        <name>substrate</name>
    </ligand>
</feature>
<feature type="binding site" evidence="10">
    <location>
        <begin position="359"/>
        <end position="363"/>
    </location>
    <ligand>
        <name>substrate</name>
    </ligand>
</feature>
<feature type="binding site" evidence="2">
    <location>
        <position position="429"/>
    </location>
    <ligand>
        <name>ATP</name>
        <dbReference type="ChEBI" id="CHEBI:30616"/>
    </ligand>
</feature>
<feature type="binding site" evidence="2">
    <location>
        <begin position="895"/>
        <end position="901"/>
    </location>
    <ligand>
        <name>ATP</name>
        <dbReference type="ChEBI" id="CHEBI:30616"/>
    </ligand>
</feature>
<feature type="modified residue" description="N6-succinyllysine" evidence="3">
    <location>
        <position position="192"/>
    </location>
</feature>
<feature type="modified residue" description="N6-succinyllysine" evidence="3">
    <location>
        <position position="697"/>
    </location>
</feature>
<feature type="splice variant" id="VSP_044303" description="In isoform 2." evidence="21">
    <location>
        <begin position="1"/>
        <end position="555"/>
    </location>
</feature>
<feature type="mutagenesis site" description="Loss of catalytic activity." evidence="5 6 10 11">
    <original>E</original>
    <variation>Q</variation>
    <location>
        <position position="111"/>
    </location>
</feature>
<feature type="mutagenesis site" description="Increases catalytic rate towards INS and amyloid; when associated with C-817." evidence="6">
    <original>S</original>
    <variation>C</variation>
    <location>
        <position position="132"/>
    </location>
</feature>
<feature type="mutagenesis site" description="Increases catalytic rate towards INS and amyloid; when associated with C-828." evidence="6">
    <original>N</original>
    <variation>C</variation>
    <location>
        <position position="184"/>
    </location>
</feature>
<feature type="mutagenesis site" description="Reduced enzyme activity." evidence="15">
    <original>P</original>
    <variation>G</variation>
    <location>
        <position position="286"/>
    </location>
</feature>
<feature type="mutagenesis site" description="Reduced enzyme activity." evidence="15">
    <original>GARG</original>
    <variation>AARA</variation>
    <location>
        <begin position="366"/>
        <end position="369"/>
    </location>
</feature>
<feature type="mutagenesis site" description="Increases catalytic rate towards INS and amyloid; when associated with C-899." evidence="6 9">
    <original>D</original>
    <variation>C</variation>
    <location>
        <position position="426"/>
    </location>
</feature>
<feature type="mutagenesis site" description="Strongly reduced enzyme activity." evidence="15">
    <original>Y</original>
    <variation>A</variation>
    <location>
        <position position="496"/>
    </location>
</feature>
<feature type="mutagenesis site" description="Strongly increased enzyme activity." evidence="15">
    <original>F</original>
    <variation>A</variation>
    <location>
        <position position="530"/>
    </location>
</feature>
<feature type="mutagenesis site" description="Decreases dimerization. No effect on degradation of ANP. Retains the ability to degrade an aberrant form of ANP, when in the presence of both ANP and the aberrant ANP." evidence="15">
    <original>R</original>
    <variation>A</variation>
    <location>
        <position position="767"/>
    </location>
</feature>
<feature type="mutagenesis site" description="Increases catalytic rate towards INS and amyloid; when associated with C-132." evidence="6">
    <original>E</original>
    <variation>C</variation>
    <location>
        <position position="817"/>
    </location>
</feature>
<feature type="mutagenesis site" description="Increases catalytic rate towards INS and amyloid; when associated with C-184." evidence="6">
    <original>Q</original>
    <variation>C</variation>
    <location>
        <position position="828"/>
    </location>
</feature>
<feature type="mutagenesis site" description="No effect on catalytic activity.">
    <original>Y</original>
    <variation>F</variation>
    <location>
        <position position="831"/>
    </location>
</feature>
<feature type="mutagenesis site" description="Increases catalytic rate towards INS and amyloid; when associated with C-426." evidence="6 9">
    <original>K</original>
    <variation>C</variation>
    <location>
        <position position="899"/>
    </location>
</feature>
<feature type="sequence conflict" description="In Ref. 2; AAA52712." evidence="23" ref="2">
    <original>I</original>
    <variation>M</variation>
    <location>
        <position position="78"/>
    </location>
</feature>
<feature type="sequence conflict" description="In Ref. 3; BAG35668." evidence="23" ref="3">
    <original>R</original>
    <variation>G</variation>
    <location>
        <position position="472"/>
    </location>
</feature>
<feature type="sequence conflict" description="In Ref. 2; AAA52712." evidence="23" ref="2">
    <original>A</original>
    <variation>V</variation>
    <location>
        <position position="555"/>
    </location>
</feature>
<feature type="sequence conflict" description="In Ref. 2; AAA52712." evidence="23" ref="2">
    <original>FFL</original>
    <variation>KKK</variation>
    <location>
        <begin position="567"/>
        <end position="569"/>
    </location>
</feature>
<feature type="sequence conflict" description="In Ref. 3; BAG35668." evidence="23" ref="3">
    <original>D</original>
    <variation>G</variation>
    <location>
        <position position="586"/>
    </location>
</feature>
<feature type="sequence conflict" description="In Ref. 2; AAA52712." evidence="23" ref="2">
    <original>G</original>
    <variation>S</variation>
    <location>
        <position position="845"/>
    </location>
</feature>
<feature type="strand" evidence="58">
    <location>
        <begin position="47"/>
        <end position="50"/>
    </location>
</feature>
<feature type="strand" evidence="58">
    <location>
        <begin position="63"/>
        <end position="69"/>
    </location>
</feature>
<feature type="strand" evidence="58">
    <location>
        <begin position="74"/>
        <end position="79"/>
    </location>
</feature>
<feature type="strand" evidence="58">
    <location>
        <begin position="84"/>
        <end position="93"/>
    </location>
</feature>
<feature type="helix" evidence="58">
    <location>
        <begin position="96"/>
        <end position="98"/>
    </location>
</feature>
<feature type="strand" evidence="63">
    <location>
        <begin position="101"/>
        <end position="104"/>
    </location>
</feature>
<feature type="helix" evidence="58">
    <location>
        <begin position="106"/>
        <end position="113"/>
    </location>
</feature>
<feature type="helix" evidence="58">
    <location>
        <begin position="114"/>
        <end position="116"/>
    </location>
</feature>
<feature type="strand" evidence="58">
    <location>
        <begin position="118"/>
        <end position="121"/>
    </location>
</feature>
<feature type="strand" evidence="63">
    <location>
        <begin position="123"/>
        <end position="125"/>
    </location>
</feature>
<feature type="helix" evidence="58">
    <location>
        <begin position="126"/>
        <end position="132"/>
    </location>
</feature>
<feature type="turn" evidence="58">
    <location>
        <begin position="133"/>
        <end position="135"/>
    </location>
</feature>
<feature type="strand" evidence="58">
    <location>
        <begin position="137"/>
        <end position="142"/>
    </location>
</feature>
<feature type="strand" evidence="58">
    <location>
        <begin position="147"/>
        <end position="154"/>
    </location>
</feature>
<feature type="helix" evidence="58">
    <location>
        <begin position="155"/>
        <end position="157"/>
    </location>
</feature>
<feature type="helix" evidence="58">
    <location>
        <begin position="158"/>
        <end position="166"/>
    </location>
</feature>
<feature type="helix" evidence="58">
    <location>
        <begin position="167"/>
        <end position="169"/>
    </location>
</feature>
<feature type="helix" evidence="58">
    <location>
        <begin position="176"/>
        <end position="194"/>
    </location>
</feature>
<feature type="helix" evidence="58">
    <location>
        <begin position="197"/>
        <end position="207"/>
    </location>
</feature>
<feature type="helix" evidence="58">
    <location>
        <begin position="214"/>
        <end position="216"/>
    </location>
</feature>
<feature type="helix" evidence="58">
    <location>
        <begin position="223"/>
        <end position="226"/>
    </location>
</feature>
<feature type="helix" evidence="58">
    <location>
        <begin position="228"/>
        <end position="232"/>
    </location>
</feature>
<feature type="helix" evidence="58">
    <location>
        <begin position="237"/>
        <end position="248"/>
    </location>
</feature>
<feature type="helix" evidence="58">
    <location>
        <begin position="251"/>
        <end position="253"/>
    </location>
</feature>
<feature type="strand" evidence="58">
    <location>
        <begin position="254"/>
        <end position="262"/>
    </location>
</feature>
<feature type="helix" evidence="58">
    <location>
        <begin position="264"/>
        <end position="275"/>
    </location>
</feature>
<feature type="strand" evidence="60">
    <location>
        <begin position="276"/>
        <end position="278"/>
    </location>
</feature>
<feature type="helix" evidence="58">
    <location>
        <begin position="295"/>
        <end position="297"/>
    </location>
</feature>
<feature type="strand" evidence="58">
    <location>
        <begin position="298"/>
        <end position="304"/>
    </location>
</feature>
<feature type="strand" evidence="58">
    <location>
        <begin position="307"/>
        <end position="309"/>
    </location>
</feature>
<feature type="strand" evidence="58">
    <location>
        <begin position="312"/>
        <end position="319"/>
    </location>
</feature>
<feature type="helix" evidence="58">
    <location>
        <begin position="323"/>
        <end position="325"/>
    </location>
</feature>
<feature type="turn" evidence="58">
    <location>
        <begin position="326"/>
        <end position="328"/>
    </location>
</feature>
<feature type="helix" evidence="58">
    <location>
        <begin position="330"/>
        <end position="338"/>
    </location>
</feature>
<feature type="helix" evidence="58">
    <location>
        <begin position="346"/>
        <end position="352"/>
    </location>
</feature>
<feature type="strand" evidence="58">
    <location>
        <begin position="359"/>
        <end position="367"/>
    </location>
</feature>
<feature type="strand" evidence="58">
    <location>
        <begin position="370"/>
        <end position="378"/>
    </location>
</feature>
<feature type="helix" evidence="58">
    <location>
        <begin position="381"/>
        <end position="385"/>
    </location>
</feature>
<feature type="helix" evidence="58">
    <location>
        <begin position="387"/>
        <end position="404"/>
    </location>
</feature>
<feature type="helix" evidence="58">
    <location>
        <begin position="408"/>
        <end position="423"/>
    </location>
</feature>
<feature type="helix" evidence="58">
    <location>
        <begin position="430"/>
        <end position="440"/>
    </location>
</feature>
<feature type="turn" evidence="58">
    <location>
        <begin position="441"/>
        <end position="443"/>
    </location>
</feature>
<feature type="helix" evidence="58">
    <location>
        <begin position="446"/>
        <end position="448"/>
    </location>
</feature>
<feature type="turn" evidence="58">
    <location>
        <begin position="449"/>
        <end position="454"/>
    </location>
</feature>
<feature type="helix" evidence="58">
    <location>
        <begin position="461"/>
        <end position="468"/>
    </location>
</feature>
<feature type="helix" evidence="58">
    <location>
        <begin position="473"/>
        <end position="475"/>
    </location>
</feature>
<feature type="strand" evidence="58">
    <location>
        <begin position="477"/>
        <end position="481"/>
    </location>
</feature>
<feature type="helix" evidence="58">
    <location>
        <begin position="483"/>
        <end position="485"/>
    </location>
</feature>
<feature type="turn" evidence="56">
    <location>
        <begin position="486"/>
        <end position="488"/>
    </location>
</feature>
<feature type="turn" evidence="58">
    <location>
        <begin position="494"/>
        <end position="496"/>
    </location>
</feature>
<feature type="strand" evidence="58">
    <location>
        <begin position="499"/>
        <end position="504"/>
    </location>
</feature>
<feature type="helix" evidence="58">
    <location>
        <begin position="507"/>
        <end position="514"/>
    </location>
</feature>
<feature type="strand" evidence="58">
    <location>
        <begin position="549"/>
        <end position="553"/>
    </location>
</feature>
<feature type="strand" evidence="58">
    <location>
        <begin position="555"/>
        <end position="563"/>
    </location>
</feature>
<feature type="strand" evidence="57">
    <location>
        <begin position="565"/>
        <end position="567"/>
    </location>
</feature>
<feature type="strand" evidence="58">
    <location>
        <begin position="570"/>
        <end position="579"/>
    </location>
</feature>
<feature type="helix" evidence="58">
    <location>
        <begin position="581"/>
        <end position="583"/>
    </location>
</feature>
<feature type="strand" evidence="59">
    <location>
        <begin position="584"/>
        <end position="586"/>
    </location>
</feature>
<feature type="helix" evidence="58">
    <location>
        <begin position="587"/>
        <end position="613"/>
    </location>
</feature>
<feature type="strand" evidence="58">
    <location>
        <begin position="616"/>
        <end position="623"/>
    </location>
</feature>
<feature type="strand" evidence="58">
    <location>
        <begin position="626"/>
        <end position="635"/>
    </location>
</feature>
<feature type="helix" evidence="58">
    <location>
        <begin position="638"/>
        <end position="650"/>
    </location>
</feature>
<feature type="helix" evidence="58">
    <location>
        <begin position="656"/>
        <end position="672"/>
    </location>
</feature>
<feature type="helix" evidence="58">
    <location>
        <begin position="673"/>
        <end position="675"/>
    </location>
</feature>
<feature type="helix" evidence="58">
    <location>
        <begin position="678"/>
        <end position="690"/>
    </location>
</feature>
<feature type="strand" evidence="58">
    <location>
        <begin position="691"/>
        <end position="693"/>
    </location>
</feature>
<feature type="helix" evidence="58">
    <location>
        <begin position="697"/>
        <end position="704"/>
    </location>
</feature>
<feature type="helix" evidence="58">
    <location>
        <begin position="709"/>
        <end position="721"/>
    </location>
</feature>
<feature type="strand" evidence="58">
    <location>
        <begin position="722"/>
        <end position="732"/>
    </location>
</feature>
<feature type="helix" evidence="58">
    <location>
        <begin position="735"/>
        <end position="753"/>
    </location>
</feature>
<feature type="helix" evidence="58">
    <location>
        <begin position="760"/>
        <end position="762"/>
    </location>
</feature>
<feature type="strand" evidence="58">
    <location>
        <begin position="775"/>
        <end position="782"/>
    </location>
</feature>
<feature type="strand" evidence="58">
    <location>
        <begin position="787"/>
        <end position="799"/>
    </location>
</feature>
<feature type="helix" evidence="58">
    <location>
        <begin position="802"/>
        <end position="823"/>
    </location>
</feature>
<feature type="turn" evidence="58">
    <location>
        <begin position="824"/>
        <end position="827"/>
    </location>
</feature>
<feature type="strand" evidence="58">
    <location>
        <begin position="831"/>
        <end position="840"/>
    </location>
</feature>
<feature type="strand" evidence="58">
    <location>
        <begin position="843"/>
        <end position="854"/>
    </location>
</feature>
<feature type="helix" evidence="58">
    <location>
        <begin position="856"/>
        <end position="876"/>
    </location>
</feature>
<feature type="helix" evidence="58">
    <location>
        <begin position="879"/>
        <end position="894"/>
    </location>
</feature>
<feature type="helix" evidence="58">
    <location>
        <begin position="900"/>
        <end position="912"/>
    </location>
</feature>
<feature type="helix" evidence="58">
    <location>
        <begin position="920"/>
        <end position="928"/>
    </location>
</feature>
<feature type="helix" evidence="58">
    <location>
        <begin position="933"/>
        <end position="943"/>
    </location>
</feature>
<feature type="strand" evidence="62">
    <location>
        <begin position="945"/>
        <end position="947"/>
    </location>
</feature>
<feature type="strand" evidence="61">
    <location>
        <begin position="949"/>
        <end position="951"/>
    </location>
</feature>
<feature type="strand" evidence="58">
    <location>
        <begin position="952"/>
        <end position="959"/>
    </location>
</feature>
<feature type="strand" evidence="60">
    <location>
        <begin position="990"/>
        <end position="992"/>
    </location>
</feature>
<feature type="helix" evidence="58">
    <location>
        <begin position="995"/>
        <end position="1000"/>
    </location>
</feature>
<comment type="function">
    <text evidence="3 5 6 9 10 11 12 13 14 15 16 17 18 19 20 28">Plays a role in the cellular breakdown of insulin, APP peptides, IAPP peptides, natriuretic peptides, glucagon, bradykinin, kallidin, and other peptides, and thereby plays a role in intercellular peptide signaling (PubMed:10684867, PubMed:17051221, PubMed:17613531, PubMed:18986166, PubMed:19321446, PubMed:21098034, PubMed:2293021, PubMed:23922390, PubMed:24847884, PubMed:26394692, PubMed:26968463, PubMed:29596046). Substrate binding induces important conformation changes, making it possible to bind and degrade larger substrates, such as insulin (PubMed:23922390, PubMed:26394692, PubMed:29596046). Contributes to the regulation of peptide hormone signaling cascades and regulation of blood glucose homeostasis via its role in the degradation of insulin, glucagon and IAPP (By similarity). Plays a role in the degradation and clearance of APP-derived amyloidogenic peptides that are secreted by neurons and microglia (Probable) (PubMed:26394692, PubMed:9830016). Degrades the natriuretic peptides ANP, BNP and CNP, inactivating their ability to raise intracellular cGMP (PubMed:21098034). Also degrades an aberrant frameshifted 40-residue form of NPPA (fsNPPA) which is associated with familial atrial fibrillation in heterozygous patients (PubMed:21098034). Involved in antigen processing. Produces both the N terminus and the C terminus of MAGEA3-derived antigenic peptide (EVDPIGHLY) that is presented to cytotoxic T lymphocytes by MHC class I.</text>
</comment>
<comment type="function">
    <text evidence="7 8">(Microbial infection) The membrane-associated isoform acts as an entry receptor for varicella-zoster virus (VZV).</text>
</comment>
<comment type="catalytic activity">
    <reaction evidence="5 6 9 10 11 13 14 15 16 17 19">
        <text>Degradation of insulin, glucagon and other polypeptides. No action on proteins.</text>
        <dbReference type="EC" id="3.4.24.56"/>
    </reaction>
</comment>
<comment type="cofactor">
    <cofactor evidence="6 10 11 13 15 17">
        <name>Zn(2+)</name>
        <dbReference type="ChEBI" id="CHEBI:29105"/>
    </cofactor>
    <text evidence="6 10 11 13 15 17">Binds 1 zinc ion per subunit.</text>
</comment>
<comment type="activity regulation">
    <text evidence="1 7 9 10">Activated by small peptides (By similarity). Activated by ATP and GTP, and to a lesser extent by CTP, TTP and PPPi (PubMed:17613531). Inhibited by bacitracin (PubMed:17055432, PubMed:17613531). In vitro modification of Cys residues impairs enzyme activity (PubMed:18986166).</text>
</comment>
<comment type="subunit">
    <text evidence="2 6 11 15 17 19 26">Homodimer (Probable) (PubMed:17051221, PubMed:19321446, PubMed:23922390, PubMed:26394692, PubMed:29596046). Can also form homotetramers (By similarity).</text>
</comment>
<comment type="subunit">
    <text evidence="7 8">(Microbial infection) Interacts (via N-terminus) with varicella-zoster virus (VZV) envelope glycoprotein E (via N-terminus); the membrane-associated isoform may function as an entry receptor for this virus (PubMed:17055432, PubMed:17553876).</text>
</comment>
<comment type="interaction">
    <interactant intactId="EBI-2556886">
        <id>P14735</id>
    </interactant>
    <interactant intactId="EBI-77613">
        <id>P05067</id>
        <label>APP</label>
    </interactant>
    <organismsDiffer>false</organismsDiffer>
    <experiments>3</experiments>
</comment>
<comment type="interaction">
    <interactant intactId="EBI-2556886">
        <id>P14735</id>
    </interactant>
    <interactant intactId="EBI-16805602">
        <id>P55773</id>
        <label>CCL23</label>
    </interactant>
    <organismsDiffer>false</organismsDiffer>
    <experiments>2</experiments>
</comment>
<comment type="interaction">
    <interactant intactId="EBI-2556886">
        <id>P14735</id>
    </interactant>
    <interactant intactId="EBI-8459634">
        <id>P10147</id>
        <label>CCL3</label>
    </interactant>
    <organismsDiffer>false</organismsDiffer>
    <experiments>3</experiments>
</comment>
<comment type="interaction">
    <interactant intactId="EBI-2556886">
        <id>P14735</id>
    </interactant>
    <interactant intactId="EBI-947410">
        <id>P02686</id>
        <label>MBP</label>
    </interactant>
    <organismsDiffer>false</organismsDiffer>
    <experiments>2</experiments>
</comment>
<comment type="interaction">
    <interactant intactId="EBI-15607031">
        <id>P14735-1</id>
    </interactant>
    <interactant intactId="EBI-2431589">
        <id>PRO_0000000093</id>
        <label>APP</label>
        <dbReference type="UniProtKB" id="P05067"/>
    </interactant>
    <organismsDiffer>false</organismsDiffer>
    <experiments>3</experiments>
</comment>
<comment type="interaction">
    <interactant intactId="EBI-15607031">
        <id>P14735-1</id>
    </interactant>
    <interactant intactId="EBI-7629173">
        <id>P01275</id>
        <label>GCG</label>
    </interactant>
    <organismsDiffer>false</organismsDiffer>
    <experiments>3</experiments>
</comment>
<comment type="interaction">
    <interactant intactId="EBI-15607031">
        <id>P14735-1</id>
    </interactant>
    <interactant intactId="EBI-8526679">
        <id>P10997</id>
        <label>IAPP</label>
    </interactant>
    <organismsDiffer>false</organismsDiffer>
    <experiments>3</experiments>
</comment>
<comment type="interaction">
    <interactant intactId="EBI-15607031">
        <id>P14735-1</id>
    </interactant>
    <interactant intactId="EBI-15607031">
        <id>P14735-1</id>
        <label>IDE</label>
    </interactant>
    <organismsDiffer>false</organismsDiffer>
    <experiments>2</experiments>
</comment>
<comment type="interaction">
    <interactant intactId="EBI-15607031">
        <id>P14735-1</id>
    </interactant>
    <interactant intactId="EBI-7090529">
        <id>P01308</id>
        <label>INS</label>
    </interactant>
    <organismsDiffer>false</organismsDiffer>
    <experiments>3</experiments>
</comment>
<comment type="interaction">
    <interactant intactId="EBI-15607031">
        <id>P14735-1</id>
    </interactant>
    <interactant intactId="EBI-2532305">
        <id>Q9J3M8</id>
        <label>gE</label>
    </interactant>
    <organismsDiffer>true</organismsDiffer>
    <experiments>2</experiments>
</comment>
<comment type="subcellular location">
    <subcellularLocation>
        <location evidence="12 20">Cytoplasm</location>
        <location evidence="12 20">Cytosol</location>
    </subcellularLocation>
    <subcellularLocation>
        <location evidence="2">Cell membrane</location>
    </subcellularLocation>
    <subcellularLocation>
        <location evidence="20">Secreted</location>
    </subcellularLocation>
    <text>Present at the cell surface of neuron cells. The membrane-associated isoform is approximately 5 kDa larger than the known cytosolic isoform.</text>
</comment>
<comment type="alternative products">
    <event type="alternative splicing"/>
    <isoform>
        <id>P14735-1</id>
        <name>1</name>
        <sequence type="displayed"/>
    </isoform>
    <isoform>
        <id>P14735-2</id>
        <name>2</name>
        <sequence type="described" ref="VSP_044303"/>
    </isoform>
</comment>
<comment type="tissue specificity">
    <text evidence="20">Detected in brain and in cerebrospinal fluid (at protein level).</text>
</comment>
<comment type="domain">
    <text evidence="3">The SlyX motif may be involved in the non-conventional secretion of the protein.</text>
</comment>
<comment type="PTM">
    <text>The N-terminus is blocked.</text>
</comment>
<comment type="miscellaneous">
    <text evidence="9">ATP-binding induces a conformation change.</text>
</comment>
<comment type="similarity">
    <text evidence="23">Belongs to the peptidase M16 family.</text>
</comment>
<gene>
    <name evidence="22 29" type="primary">IDE</name>
</gene>
<evidence type="ECO:0000250" key="1"/>
<evidence type="ECO:0000250" key="2">
    <source>
        <dbReference type="UniProtKB" id="P35559"/>
    </source>
</evidence>
<evidence type="ECO:0000250" key="3">
    <source>
        <dbReference type="UniProtKB" id="Q9JHR7"/>
    </source>
</evidence>
<evidence type="ECO:0000255" key="4">
    <source>
        <dbReference type="PROSITE-ProRule" id="PRU10096"/>
    </source>
</evidence>
<evidence type="ECO:0000269" key="5">
    <source>
    </source>
</evidence>
<evidence type="ECO:0000269" key="6">
    <source>
    </source>
</evidence>
<evidence type="ECO:0000269" key="7">
    <source>
    </source>
</evidence>
<evidence type="ECO:0000269" key="8">
    <source>
    </source>
</evidence>
<evidence type="ECO:0000269" key="9">
    <source>
    </source>
</evidence>
<evidence type="ECO:0000269" key="10">
    <source>
    </source>
</evidence>
<evidence type="ECO:0000269" key="11">
    <source>
    </source>
</evidence>
<evidence type="ECO:0000269" key="12">
    <source>
    </source>
</evidence>
<evidence type="ECO:0000269" key="13">
    <source>
    </source>
</evidence>
<evidence type="ECO:0000269" key="14">
    <source>
    </source>
</evidence>
<evidence type="ECO:0000269" key="15">
    <source>
    </source>
</evidence>
<evidence type="ECO:0000269" key="16">
    <source>
    </source>
</evidence>
<evidence type="ECO:0000269" key="17">
    <source>
    </source>
</evidence>
<evidence type="ECO:0000269" key="18">
    <source>
    </source>
</evidence>
<evidence type="ECO:0000269" key="19">
    <source>
    </source>
</evidence>
<evidence type="ECO:0000269" key="20">
    <source>
    </source>
</evidence>
<evidence type="ECO:0000303" key="21">
    <source>
    </source>
</evidence>
<evidence type="ECO:0000303" key="22">
    <source>
    </source>
</evidence>
<evidence type="ECO:0000305" key="23"/>
<evidence type="ECO:0000305" key="24">
    <source>
    </source>
</evidence>
<evidence type="ECO:0000305" key="25">
    <source>
    </source>
</evidence>
<evidence type="ECO:0000305" key="26">
    <source>
    </source>
</evidence>
<evidence type="ECO:0000305" key="27">
    <source>
    </source>
</evidence>
<evidence type="ECO:0000305" key="28">
    <source>
    </source>
</evidence>
<evidence type="ECO:0000312" key="29">
    <source>
        <dbReference type="HGNC" id="HGNC:5381"/>
    </source>
</evidence>
<evidence type="ECO:0007744" key="30">
    <source>
        <dbReference type="PDB" id="2G47"/>
    </source>
</evidence>
<evidence type="ECO:0007744" key="31">
    <source>
        <dbReference type="PDB" id="2G48"/>
    </source>
</evidence>
<evidence type="ECO:0007744" key="32">
    <source>
        <dbReference type="PDB" id="2G49"/>
    </source>
</evidence>
<evidence type="ECO:0007744" key="33">
    <source>
        <dbReference type="PDB" id="2G54"/>
    </source>
</evidence>
<evidence type="ECO:0007744" key="34">
    <source>
        <dbReference type="PDB" id="2G56"/>
    </source>
</evidence>
<evidence type="ECO:0007744" key="35">
    <source>
        <dbReference type="PDB" id="2JBU"/>
    </source>
</evidence>
<evidence type="ECO:0007744" key="36">
    <source>
        <dbReference type="PDB" id="2JG4"/>
    </source>
</evidence>
<evidence type="ECO:0007744" key="37">
    <source>
        <dbReference type="PDB" id="2WBY"/>
    </source>
</evidence>
<evidence type="ECO:0007744" key="38">
    <source>
        <dbReference type="PDB" id="2WC0"/>
    </source>
</evidence>
<evidence type="ECO:0007744" key="39">
    <source>
        <dbReference type="PDB" id="3CWW"/>
    </source>
</evidence>
<evidence type="ECO:0007744" key="40">
    <source>
        <dbReference type="PDB" id="3N56"/>
    </source>
</evidence>
<evidence type="ECO:0007744" key="41">
    <source>
        <dbReference type="PDB" id="3N57"/>
    </source>
</evidence>
<evidence type="ECO:0007744" key="42">
    <source>
        <dbReference type="PDB" id="4IFH"/>
    </source>
</evidence>
<evidence type="ECO:0007744" key="43">
    <source>
        <dbReference type="PDB" id="4IOF"/>
    </source>
</evidence>
<evidence type="ECO:0007744" key="44">
    <source>
        <dbReference type="PDB" id="4LTE"/>
    </source>
</evidence>
<evidence type="ECO:0007744" key="45">
    <source>
        <dbReference type="PDB" id="4NXO"/>
    </source>
</evidence>
<evidence type="ECO:0007744" key="46">
    <source>
        <dbReference type="PDB" id="4RE9"/>
    </source>
</evidence>
<evidence type="ECO:0007744" key="47">
    <source>
        <dbReference type="PDB" id="6B3Q"/>
    </source>
</evidence>
<evidence type="ECO:0007744" key="48">
    <source>
        <dbReference type="PDB" id="6B70"/>
    </source>
</evidence>
<evidence type="ECO:0007744" key="49">
    <source>
        <dbReference type="PDB" id="6B7Y"/>
    </source>
</evidence>
<evidence type="ECO:0007744" key="50">
    <source>
        <dbReference type="PDB" id="6B7Z"/>
    </source>
</evidence>
<evidence type="ECO:0007744" key="51">
    <source>
        <dbReference type="PDB" id="6BF6"/>
    </source>
</evidence>
<evidence type="ECO:0007744" key="52">
    <source>
        <dbReference type="PDB" id="6BF7"/>
    </source>
</evidence>
<evidence type="ECO:0007744" key="53">
    <source>
        <dbReference type="PDB" id="6BF8"/>
    </source>
</evidence>
<evidence type="ECO:0007744" key="54">
    <source>
        <dbReference type="PDB" id="6BF9"/>
    </source>
</evidence>
<evidence type="ECO:0007744" key="55">
    <source>
        <dbReference type="PDB" id="6BFC"/>
    </source>
</evidence>
<evidence type="ECO:0007829" key="56">
    <source>
        <dbReference type="PDB" id="2G48"/>
    </source>
</evidence>
<evidence type="ECO:0007829" key="57">
    <source>
        <dbReference type="PDB" id="2G54"/>
    </source>
</evidence>
<evidence type="ECO:0007829" key="58">
    <source>
        <dbReference type="PDB" id="3CWW"/>
    </source>
</evidence>
<evidence type="ECO:0007829" key="59">
    <source>
        <dbReference type="PDB" id="4PES"/>
    </source>
</evidence>
<evidence type="ECO:0007829" key="60">
    <source>
        <dbReference type="PDB" id="4PF9"/>
    </source>
</evidence>
<evidence type="ECO:0007829" key="61">
    <source>
        <dbReference type="PDB" id="7RZE"/>
    </source>
</evidence>
<evidence type="ECO:0007829" key="62">
    <source>
        <dbReference type="PDB" id="7RZF"/>
    </source>
</evidence>
<evidence type="ECO:0007829" key="63">
    <source>
        <dbReference type="PDB" id="7RZI"/>
    </source>
</evidence>
<name>IDE_HUMAN</name>
<organism>
    <name type="scientific">Homo sapiens</name>
    <name type="common">Human</name>
    <dbReference type="NCBI Taxonomy" id="9606"/>
    <lineage>
        <taxon>Eukaryota</taxon>
        <taxon>Metazoa</taxon>
        <taxon>Chordata</taxon>
        <taxon>Craniata</taxon>
        <taxon>Vertebrata</taxon>
        <taxon>Euteleostomi</taxon>
        <taxon>Mammalia</taxon>
        <taxon>Eutheria</taxon>
        <taxon>Euarchontoglires</taxon>
        <taxon>Primates</taxon>
        <taxon>Haplorrhini</taxon>
        <taxon>Catarrhini</taxon>
        <taxon>Hominidae</taxon>
        <taxon>Homo</taxon>
    </lineage>
</organism>
<accession>P14735</accession>
<accession>B2R721</accession>
<accession>B7ZAU2</accession>
<accession>D3DR35</accession>
<accession>Q5T5N2</accession>
<keyword id="KW-0002">3D-structure</keyword>
<keyword id="KW-0021">Allosteric enzyme</keyword>
<keyword id="KW-0025">Alternative splicing</keyword>
<keyword id="KW-0067">ATP-binding</keyword>
<keyword id="KW-1003">Cell membrane</keyword>
<keyword id="KW-0963">Cytoplasm</keyword>
<keyword id="KW-0903">Direct protein sequencing</keyword>
<keyword id="KW-1183">Host cell receptor for virus entry</keyword>
<keyword id="KW-0945">Host-virus interaction</keyword>
<keyword id="KW-0378">Hydrolase</keyword>
<keyword id="KW-0472">Membrane</keyword>
<keyword id="KW-0479">Metal-binding</keyword>
<keyword id="KW-0482">Metalloprotease</keyword>
<keyword id="KW-0547">Nucleotide-binding</keyword>
<keyword id="KW-0645">Protease</keyword>
<keyword id="KW-1267">Proteomics identification</keyword>
<keyword id="KW-0675">Receptor</keyword>
<keyword id="KW-1185">Reference proteome</keyword>
<keyword id="KW-0964">Secreted</keyword>
<keyword id="KW-0862">Zinc</keyword>
<reference key="1">
    <citation type="journal article" date="1988" name="Science">
        <title>Human insulin-degrading enzyme shares structural and functional homologies with E. coli protease III.</title>
        <authorList>
            <person name="Affholter J.A."/>
            <person name="Fried V.A."/>
            <person name="Roth R.A."/>
        </authorList>
    </citation>
    <scope>NUCLEOTIDE SEQUENCE [MRNA] (ISOFORM 1)</scope>
    <scope>PARTIAL PROTEIN SEQUENCE</scope>
</reference>
<reference key="2">
    <citation type="journal article" date="1990" name="Mol. Endocrinol.">
        <title>Insulin-degrading enzyme: stable expression of the human complementary DNA, characterization of its protein product, and chromosomal mapping of the human and mouse genes.</title>
        <authorList>
            <person name="Affholter J.A."/>
            <person name="Hsieh C.L."/>
            <person name="Francke U."/>
            <person name="Roth R.A."/>
        </authorList>
    </citation>
    <scope>NUCLEOTIDE SEQUENCE [MRNA] (ISOFORM 1)</scope>
    <scope>SEQUENCE REVISION</scope>
    <scope>FUNCTION</scope>
    <scope>CATALYTIC ACTIVITY</scope>
</reference>
<reference key="3">
    <citation type="journal article" date="2004" name="Nat. Genet.">
        <title>Complete sequencing and characterization of 21,243 full-length human cDNAs.</title>
        <authorList>
            <person name="Ota T."/>
            <person name="Suzuki Y."/>
            <person name="Nishikawa T."/>
            <person name="Otsuki T."/>
            <person name="Sugiyama T."/>
            <person name="Irie R."/>
            <person name="Wakamatsu A."/>
            <person name="Hayashi K."/>
            <person name="Sato H."/>
            <person name="Nagai K."/>
            <person name="Kimura K."/>
            <person name="Makita H."/>
            <person name="Sekine M."/>
            <person name="Obayashi M."/>
            <person name="Nishi T."/>
            <person name="Shibahara T."/>
            <person name="Tanaka T."/>
            <person name="Ishii S."/>
            <person name="Yamamoto J."/>
            <person name="Saito K."/>
            <person name="Kawai Y."/>
            <person name="Isono Y."/>
            <person name="Nakamura Y."/>
            <person name="Nagahari K."/>
            <person name="Murakami K."/>
            <person name="Yasuda T."/>
            <person name="Iwayanagi T."/>
            <person name="Wagatsuma M."/>
            <person name="Shiratori A."/>
            <person name="Sudo H."/>
            <person name="Hosoiri T."/>
            <person name="Kaku Y."/>
            <person name="Kodaira H."/>
            <person name="Kondo H."/>
            <person name="Sugawara M."/>
            <person name="Takahashi M."/>
            <person name="Kanda K."/>
            <person name="Yokoi T."/>
            <person name="Furuya T."/>
            <person name="Kikkawa E."/>
            <person name="Omura Y."/>
            <person name="Abe K."/>
            <person name="Kamihara K."/>
            <person name="Katsuta N."/>
            <person name="Sato K."/>
            <person name="Tanikawa M."/>
            <person name="Yamazaki M."/>
            <person name="Ninomiya K."/>
            <person name="Ishibashi T."/>
            <person name="Yamashita H."/>
            <person name="Murakawa K."/>
            <person name="Fujimori K."/>
            <person name="Tanai H."/>
            <person name="Kimata M."/>
            <person name="Watanabe M."/>
            <person name="Hiraoka S."/>
            <person name="Chiba Y."/>
            <person name="Ishida S."/>
            <person name="Ono Y."/>
            <person name="Takiguchi S."/>
            <person name="Watanabe S."/>
            <person name="Yosida M."/>
            <person name="Hotuta T."/>
            <person name="Kusano J."/>
            <person name="Kanehori K."/>
            <person name="Takahashi-Fujii A."/>
            <person name="Hara H."/>
            <person name="Tanase T.-O."/>
            <person name="Nomura Y."/>
            <person name="Togiya S."/>
            <person name="Komai F."/>
            <person name="Hara R."/>
            <person name="Takeuchi K."/>
            <person name="Arita M."/>
            <person name="Imose N."/>
            <person name="Musashino K."/>
            <person name="Yuuki H."/>
            <person name="Oshima A."/>
            <person name="Sasaki N."/>
            <person name="Aotsuka S."/>
            <person name="Yoshikawa Y."/>
            <person name="Matsunawa H."/>
            <person name="Ichihara T."/>
            <person name="Shiohata N."/>
            <person name="Sano S."/>
            <person name="Moriya S."/>
            <person name="Momiyama H."/>
            <person name="Satoh N."/>
            <person name="Takami S."/>
            <person name="Terashima Y."/>
            <person name="Suzuki O."/>
            <person name="Nakagawa S."/>
            <person name="Senoh A."/>
            <person name="Mizoguchi H."/>
            <person name="Goto Y."/>
            <person name="Shimizu F."/>
            <person name="Wakebe H."/>
            <person name="Hishigaki H."/>
            <person name="Watanabe T."/>
            <person name="Sugiyama A."/>
            <person name="Takemoto M."/>
            <person name="Kawakami B."/>
            <person name="Yamazaki M."/>
            <person name="Watanabe K."/>
            <person name="Kumagai A."/>
            <person name="Itakura S."/>
            <person name="Fukuzumi Y."/>
            <person name="Fujimori Y."/>
            <person name="Komiyama M."/>
            <person name="Tashiro H."/>
            <person name="Tanigami A."/>
            <person name="Fujiwara T."/>
            <person name="Ono T."/>
            <person name="Yamada K."/>
            <person name="Fujii Y."/>
            <person name="Ozaki K."/>
            <person name="Hirao M."/>
            <person name="Ohmori Y."/>
            <person name="Kawabata A."/>
            <person name="Hikiji T."/>
            <person name="Kobatake N."/>
            <person name="Inagaki H."/>
            <person name="Ikema Y."/>
            <person name="Okamoto S."/>
            <person name="Okitani R."/>
            <person name="Kawakami T."/>
            <person name="Noguchi S."/>
            <person name="Itoh T."/>
            <person name="Shigeta K."/>
            <person name="Senba T."/>
            <person name="Matsumura K."/>
            <person name="Nakajima Y."/>
            <person name="Mizuno T."/>
            <person name="Morinaga M."/>
            <person name="Sasaki M."/>
            <person name="Togashi T."/>
            <person name="Oyama M."/>
            <person name="Hata H."/>
            <person name="Watanabe M."/>
            <person name="Komatsu T."/>
            <person name="Mizushima-Sugano J."/>
            <person name="Satoh T."/>
            <person name="Shirai Y."/>
            <person name="Takahashi Y."/>
            <person name="Nakagawa K."/>
            <person name="Okumura K."/>
            <person name="Nagase T."/>
            <person name="Nomura N."/>
            <person name="Kikuchi H."/>
            <person name="Masuho Y."/>
            <person name="Yamashita R."/>
            <person name="Nakai K."/>
            <person name="Yada T."/>
            <person name="Nakamura Y."/>
            <person name="Ohara O."/>
            <person name="Isogai T."/>
            <person name="Sugano S."/>
        </authorList>
    </citation>
    <scope>NUCLEOTIDE SEQUENCE [LARGE SCALE MRNA] (ISOFORMS 1 AND 2)</scope>
    <source>
        <tissue>Testis</tissue>
    </source>
</reference>
<reference key="4">
    <citation type="journal article" date="2004" name="Nature">
        <title>The DNA sequence and comparative analysis of human chromosome 10.</title>
        <authorList>
            <person name="Deloukas P."/>
            <person name="Earthrowl M.E."/>
            <person name="Grafham D.V."/>
            <person name="Rubenfield M."/>
            <person name="French L."/>
            <person name="Steward C.A."/>
            <person name="Sims S.K."/>
            <person name="Jones M.C."/>
            <person name="Searle S."/>
            <person name="Scott C."/>
            <person name="Howe K."/>
            <person name="Hunt S.E."/>
            <person name="Andrews T.D."/>
            <person name="Gilbert J.G.R."/>
            <person name="Swarbreck D."/>
            <person name="Ashurst J.L."/>
            <person name="Taylor A."/>
            <person name="Battles J."/>
            <person name="Bird C.P."/>
            <person name="Ainscough R."/>
            <person name="Almeida J.P."/>
            <person name="Ashwell R.I.S."/>
            <person name="Ambrose K.D."/>
            <person name="Babbage A.K."/>
            <person name="Bagguley C.L."/>
            <person name="Bailey J."/>
            <person name="Banerjee R."/>
            <person name="Bates K."/>
            <person name="Beasley H."/>
            <person name="Bray-Allen S."/>
            <person name="Brown A.J."/>
            <person name="Brown J.Y."/>
            <person name="Burford D.C."/>
            <person name="Burrill W."/>
            <person name="Burton J."/>
            <person name="Cahill P."/>
            <person name="Camire D."/>
            <person name="Carter N.P."/>
            <person name="Chapman J.C."/>
            <person name="Clark S.Y."/>
            <person name="Clarke G."/>
            <person name="Clee C.M."/>
            <person name="Clegg S."/>
            <person name="Corby N."/>
            <person name="Coulson A."/>
            <person name="Dhami P."/>
            <person name="Dutta I."/>
            <person name="Dunn M."/>
            <person name="Faulkner L."/>
            <person name="Frankish A."/>
            <person name="Frankland J.A."/>
            <person name="Garner P."/>
            <person name="Garnett J."/>
            <person name="Gribble S."/>
            <person name="Griffiths C."/>
            <person name="Grocock R."/>
            <person name="Gustafson E."/>
            <person name="Hammond S."/>
            <person name="Harley J.L."/>
            <person name="Hart E."/>
            <person name="Heath P.D."/>
            <person name="Ho T.P."/>
            <person name="Hopkins B."/>
            <person name="Horne J."/>
            <person name="Howden P.J."/>
            <person name="Huckle E."/>
            <person name="Hynds C."/>
            <person name="Johnson C."/>
            <person name="Johnson D."/>
            <person name="Kana A."/>
            <person name="Kay M."/>
            <person name="Kimberley A.M."/>
            <person name="Kershaw J.K."/>
            <person name="Kokkinaki M."/>
            <person name="Laird G.K."/>
            <person name="Lawlor S."/>
            <person name="Lee H.M."/>
            <person name="Leongamornlert D.A."/>
            <person name="Laird G."/>
            <person name="Lloyd C."/>
            <person name="Lloyd D.M."/>
            <person name="Loveland J."/>
            <person name="Lovell J."/>
            <person name="McLaren S."/>
            <person name="McLay K.E."/>
            <person name="McMurray A."/>
            <person name="Mashreghi-Mohammadi M."/>
            <person name="Matthews L."/>
            <person name="Milne S."/>
            <person name="Nickerson T."/>
            <person name="Nguyen M."/>
            <person name="Overton-Larty E."/>
            <person name="Palmer S.A."/>
            <person name="Pearce A.V."/>
            <person name="Peck A.I."/>
            <person name="Pelan S."/>
            <person name="Phillimore B."/>
            <person name="Porter K."/>
            <person name="Rice C.M."/>
            <person name="Rogosin A."/>
            <person name="Ross M.T."/>
            <person name="Sarafidou T."/>
            <person name="Sehra H.K."/>
            <person name="Shownkeen R."/>
            <person name="Skuce C.D."/>
            <person name="Smith M."/>
            <person name="Standring L."/>
            <person name="Sycamore N."/>
            <person name="Tester J."/>
            <person name="Thorpe A."/>
            <person name="Torcasso W."/>
            <person name="Tracey A."/>
            <person name="Tromans A."/>
            <person name="Tsolas J."/>
            <person name="Wall M."/>
            <person name="Walsh J."/>
            <person name="Wang H."/>
            <person name="Weinstock K."/>
            <person name="West A.P."/>
            <person name="Willey D.L."/>
            <person name="Whitehead S.L."/>
            <person name="Wilming L."/>
            <person name="Wray P.W."/>
            <person name="Young L."/>
            <person name="Chen Y."/>
            <person name="Lovering R.C."/>
            <person name="Moschonas N.K."/>
            <person name="Siebert R."/>
            <person name="Fechtel K."/>
            <person name="Bentley D."/>
            <person name="Durbin R.M."/>
            <person name="Hubbard T."/>
            <person name="Doucette-Stamm L."/>
            <person name="Beck S."/>
            <person name="Smith D.R."/>
            <person name="Rogers J."/>
        </authorList>
    </citation>
    <scope>NUCLEOTIDE SEQUENCE [LARGE SCALE GENOMIC DNA]</scope>
</reference>
<reference key="5">
    <citation type="submission" date="2005-09" db="EMBL/GenBank/DDBJ databases">
        <authorList>
            <person name="Mural R.J."/>
            <person name="Istrail S."/>
            <person name="Sutton G.G."/>
            <person name="Florea L."/>
            <person name="Halpern A.L."/>
            <person name="Mobarry C.M."/>
            <person name="Lippert R."/>
            <person name="Walenz B."/>
            <person name="Shatkay H."/>
            <person name="Dew I."/>
            <person name="Miller J.R."/>
            <person name="Flanigan M.J."/>
            <person name="Edwards N.J."/>
            <person name="Bolanos R."/>
            <person name="Fasulo D."/>
            <person name="Halldorsson B.V."/>
            <person name="Hannenhalli S."/>
            <person name="Turner R."/>
            <person name="Yooseph S."/>
            <person name="Lu F."/>
            <person name="Nusskern D.R."/>
            <person name="Shue B.C."/>
            <person name="Zheng X.H."/>
            <person name="Zhong F."/>
            <person name="Delcher A.L."/>
            <person name="Huson D.H."/>
            <person name="Kravitz S.A."/>
            <person name="Mouchard L."/>
            <person name="Reinert K."/>
            <person name="Remington K.A."/>
            <person name="Clark A.G."/>
            <person name="Waterman M.S."/>
            <person name="Eichler E.E."/>
            <person name="Adams M.D."/>
            <person name="Hunkapiller M.W."/>
            <person name="Myers E.W."/>
            <person name="Venter J.C."/>
        </authorList>
    </citation>
    <scope>NUCLEOTIDE SEQUENCE [LARGE SCALE GENOMIC DNA]</scope>
</reference>
<reference key="6">
    <citation type="journal article" date="2004" name="Genome Res.">
        <title>The status, quality, and expansion of the NIH full-length cDNA project: the Mammalian Gene Collection (MGC).</title>
        <authorList>
            <consortium name="The MGC Project Team"/>
        </authorList>
    </citation>
    <scope>NUCLEOTIDE SEQUENCE [LARGE SCALE MRNA] (ISOFORM 1)</scope>
</reference>
<reference key="7">
    <citation type="journal article" date="1998" name="J. Biol. Chem.">
        <title>Insulin-degrading enzyme regulates extracellular levels of amyloid beta-protein by degradation.</title>
        <authorList>
            <person name="Qiu W.Q."/>
            <person name="Walsh D.M."/>
            <person name="Ye Z."/>
            <person name="Vekrellis K."/>
            <person name="Zhang J."/>
            <person name="Podlisny M.B."/>
            <person name="Rosner M.R."/>
            <person name="Safavi A."/>
            <person name="Hersh L.B."/>
            <person name="Selkoe D.J."/>
        </authorList>
    </citation>
    <scope>FUNCTION</scope>
    <scope>SUBCELLULAR LOCATION</scope>
    <scope>TISSUE SPECIFICITY</scope>
</reference>
<reference key="8">
    <citation type="journal article" date="2000" name="J. Neurosci.">
        <title>Neurons regulate extracellular levels of amyloid beta-protein via proteolysis by insulin-degrading enzyme.</title>
        <authorList>
            <person name="Vekrellis K."/>
            <person name="Ye Z."/>
            <person name="Qiu W.Q."/>
            <person name="Walsh D."/>
            <person name="Hartley D."/>
            <person name="Chesneau V."/>
            <person name="Rosner M.R."/>
            <person name="Selkoe D.J."/>
        </authorList>
    </citation>
    <scope>FUNCTION</scope>
    <scope>SUBCELLULAR LOCATION</scope>
    <scope>CATALYTIC ACTIVITY</scope>
    <scope>MUTAGENESIS OF GLU-111</scope>
    <scope>ACTIVE SITE</scope>
</reference>
<reference key="9">
    <citation type="journal article" date="2006" name="Cell">
        <title>Insulin degrading enzyme is a cellular receptor mediating varicella-zoster virus infection and cell-to-cell spread.</title>
        <authorList>
            <person name="Li Q."/>
            <person name="Ali M.A."/>
            <person name="Cohen J.I."/>
        </authorList>
    </citation>
    <scope>SUBCELLULAR LOCATION</scope>
    <scope>FUNCTION (MICROBIAL INFECTION)</scope>
    <scope>INTERACTION WITH VZV GLYCOPROTEIN E</scope>
    <scope>ACTIVITY REGULATION</scope>
</reference>
<reference key="10">
    <citation type="journal article" date="2007" name="J. Virol.">
        <title>The amino terminus of varicella-zoster virus (VZV) glycoprotein E is required for binding to insulin-degrading enzyme, a VZV receptor.</title>
        <authorList>
            <person name="Li Q."/>
            <person name="Krogmann T."/>
            <person name="Ali M.A."/>
            <person name="Tang W.-J."/>
            <person name="Cohen J.I."/>
        </authorList>
    </citation>
    <scope>FUNCTION (MICROBIAL INFECTION)</scope>
    <scope>INTERACTION WITH VZV GLYCOPROTEIN E</scope>
</reference>
<reference key="11">
    <citation type="journal article" date="2010" name="Nat. Immunol.">
        <title>Production of an antigenic peptide by insulin-degrading enzyme.</title>
        <authorList>
            <person name="Parmentier N."/>
            <person name="Stroobant V."/>
            <person name="Colau D."/>
            <person name="de Diesbach P."/>
            <person name="Morel S."/>
            <person name="Chapiro J."/>
            <person name="van Endert P."/>
            <person name="Van den Eynde B.J."/>
        </authorList>
    </citation>
    <scope>FUNCTION</scope>
    <scope>SUBCELLULAR LOCATION</scope>
</reference>
<reference key="12">
    <citation type="journal article" date="2011" name="BMC Syst. Biol.">
        <title>Initial characterization of the human central proteome.</title>
        <authorList>
            <person name="Burkard T.R."/>
            <person name="Planyavsky M."/>
            <person name="Kaupe I."/>
            <person name="Breitwieser F.P."/>
            <person name="Buerckstuemmer T."/>
            <person name="Bennett K.L."/>
            <person name="Superti-Furga G."/>
            <person name="Colinge J."/>
        </authorList>
    </citation>
    <scope>IDENTIFICATION BY MASS SPECTROMETRY [LARGE SCALE ANALYSIS]</scope>
</reference>
<reference key="13">
    <citation type="journal article" date="2016" name="Biochim. Biophys. Acta">
        <title>Characterization of insulin-degrading enzyme-mediated cleavage of Abeta in distinct aggregation states.</title>
        <authorList>
            <person name="Hubin E."/>
            <person name="Cioffi F."/>
            <person name="Rozenski J."/>
            <person name="van Nuland N.A."/>
            <person name="Broersen K."/>
        </authorList>
    </citation>
    <scope>FUNCTION</scope>
</reference>
<reference evidence="30 31 32 33 34" key="14">
    <citation type="journal article" date="2006" name="Nature">
        <title>Structures of human insulin-degrading enzyme reveal a new substrate recognition mechanism.</title>
        <authorList>
            <person name="Shen Y."/>
            <person name="Joachimiak A."/>
            <person name="Rosner M.R."/>
            <person name="Tang W.-J."/>
        </authorList>
    </citation>
    <scope>X-RAY CRYSTALLOGRAPHY (2.1 ANGSTROMS) OF 42-1019 OF MUTANT GLN-111 IN COMPLEXES WITH ZINC IONS; IAPP; INSULIN; AMYLOID AND GLUCAGON</scope>
    <scope>MUTAGENESIS OF GLU-111; SER-132; ASN-184; ASP-426; GLU-817; GLN-828 AND LYS-899</scope>
    <scope>FUNCTION</scope>
    <scope>CATALYTIC ACTIVITY</scope>
    <scope>COFACTOR</scope>
    <scope>ACTIVE SITE</scope>
    <scope>SUBUNIT</scope>
</reference>
<reference evidence="35 36" key="15">
    <citation type="journal article" date="2007" name="J. Biol. Chem.">
        <title>Structure of substrate-free human insulin-degrading enzyme (IDE) and biophysical analysis of ATP-induced conformational switch of IDE.</title>
        <authorList>
            <person name="Im H."/>
            <person name="Manolopoulou M."/>
            <person name="Malito E."/>
            <person name="Shen Y."/>
            <person name="Zhao J."/>
            <person name="Neant-Fery M."/>
            <person name="Sun C.-Y."/>
            <person name="Meredith S.C."/>
            <person name="Sisodia S.S."/>
            <person name="Leissring M.A."/>
            <person name="Tang W.-J."/>
        </authorList>
    </citation>
    <scope>X-RAY CRYSTALLOGRAPHY (2.8 ANGSTROMS) OF 43-1018 OF MUTANT PHE-831 IN COMPLEX WITH ZINC IONS AND SUBSTRATE PEPTIDE</scope>
    <scope>CATALYTIC ACTIVITY</scope>
    <scope>ACTIVITY REGULATION</scope>
    <scope>ATP-BINDING</scope>
    <scope>SUBUNIT</scope>
    <scope>MUTAGENESIS OF ASP-426 AND LYS-899</scope>
    <scope>FUNCTION</scope>
</reference>
<reference evidence="39" key="16">
    <citation type="journal article" date="2008" name="Biochemistry">
        <title>Molecular bases for the recognition of short peptide substrates and cysteine-directed modifications of human insulin-degrading enzyme.</title>
        <authorList>
            <person name="Malito E."/>
            <person name="Ralat L.A."/>
            <person name="Manolopoulou M."/>
            <person name="Tsay J.L."/>
            <person name="Wadlington N.L."/>
            <person name="Tang W.-J."/>
        </authorList>
    </citation>
    <scope>X-RAY CRYSTALLOGRAPHY (1.96 ANGSTROMS) OF 42-1019 OF MUTANT GLN-111 IN COMPLEX WITH BRADYKININ AND ZINC IONS</scope>
    <scope>FUNCTION</scope>
    <scope>CATALYTIC ACTIVITY</scope>
    <scope>ACTIVITY REGULATION</scope>
</reference>
<reference evidence="37 38" key="17">
    <citation type="journal article" date="2009" name="J. Biol. Chem.">
        <title>Molecular basis of catalytic chamber-assisted unfolding and cleavage of human insulin by human insulin-degrading enzyme.</title>
        <authorList>
            <person name="Manolopoulou M."/>
            <person name="Guo Q."/>
            <person name="Malito E."/>
            <person name="Schilling A.B."/>
            <person name="Tang W.J."/>
        </authorList>
    </citation>
    <scope>X-RAY CRYSTALLOGRAPHY (2.60 ANGSTROMS) OF 42-1019 IN COMPLEX WITH INSULIN AND ZINC</scope>
    <scope>FUNCTION</scope>
    <scope>CATALYTIC ACTIVITY</scope>
    <scope>SUBUNIT</scope>
    <scope>COFACTOR</scope>
    <scope>MUTAGENESIS OF GLU-111</scope>
    <scope>ACTIVE SITE</scope>
</reference>
<reference evidence="40 41" key="18">
    <citation type="journal article" date="2011" name="J. Biol. Chem.">
        <title>Insulin-degrading enzyme modulates the natriuretic peptide-mediated signaling response.</title>
        <authorList>
            <person name="Ralat L.A."/>
            <person name="Guo Q."/>
            <person name="Ren M."/>
            <person name="Funke T."/>
            <person name="Dickey D.M."/>
            <person name="Potter L.R."/>
            <person name="Tang W.J."/>
        </authorList>
    </citation>
    <scope>X-RAY CRYSTALLOGRAPHY (3.03 ANGSTROMS) OF 42-1019 IN COMPLEX WITH ZINC</scope>
    <scope>FUNCTION</scope>
    <scope>CATALYTIC ACTIVITY</scope>
    <scope>COFACTOR</scope>
    <scope>MUTAGENESIS OF ARG-767</scope>
</reference>
<reference evidence="43" key="19">
    <citation type="journal article" date="2013" name="Proc. Natl. Acad. Sci. U.S.A.">
        <title>Conformational states and recognition of amyloidogenic peptides of human insulin-degrading enzyme.</title>
        <authorList>
            <person name="McCord L.A."/>
            <person name="Liang W.G."/>
            <person name="Dowdell E."/>
            <person name="Kalas V."/>
            <person name="Hoey R.J."/>
            <person name="Koide A."/>
            <person name="Koide S."/>
            <person name="Tang W.J."/>
        </authorList>
    </citation>
    <scope>X-RAY CRYSTALLOGRAPHY (3.35 ANGSTROMS) OF 42-1019 IN COMPLEX WITH ZINC</scope>
    <scope>FUNCTION</scope>
    <scope>CATALYTIC ACTIVITY</scope>
    <scope>COFACTOR</scope>
    <scope>SUBUNIT</scope>
    <scope>MUTAGENESIS OF PRO-286; 366-GLY--GLY-369; TYR-496; PHE-530 AND ARG-767</scope>
    <scope>ACTIVE SITE</scope>
</reference>
<reference evidence="44" key="20">
    <citation type="journal article" date="2014" name="Nature">
        <title>Anti-diabetic activity of insulin-degrading enzyme inhibitors mediated by multiple hormones.</title>
        <authorList>
            <person name="Maianti J.P."/>
            <person name="McFedries A."/>
            <person name="Foda Z.H."/>
            <person name="Kleiner R.E."/>
            <person name="Du X.Q."/>
            <person name="Leissring M.A."/>
            <person name="Tang W.J."/>
            <person name="Charron M.J."/>
            <person name="Seeliger M.A."/>
            <person name="Saghatelian A."/>
            <person name="Liu D.R."/>
        </authorList>
    </citation>
    <scope>X-RAY CRYSTALLOGRAPHY (2.71 ANGSTROMS) OF 42-1019 IN COMPLEX WITH ZINC</scope>
    <scope>CATALYTIC ACTIVITY</scope>
    <scope>FUNCTION</scope>
</reference>
<reference evidence="42 45 46" key="21">
    <citation type="journal article" date="2015" name="Nat. Commun.">
        <title>Catalytic site inhibition of insulin-degrading enzyme by a small molecule induces glucose intolerance in mice.</title>
        <authorList>
            <person name="Deprez-Poulain R."/>
            <person name="Hennuyer N."/>
            <person name="Bosc D."/>
            <person name="Liang W.G."/>
            <person name="Enee E."/>
            <person name="Marechal X."/>
            <person name="Charton J."/>
            <person name="Totobenazara J."/>
            <person name="Berte G."/>
            <person name="Jahklal J."/>
            <person name="Verdelet T."/>
            <person name="Dumont J."/>
            <person name="Dassonneville S."/>
            <person name="Woitrain E."/>
            <person name="Gauriot M."/>
            <person name="Paquet C."/>
            <person name="Duplan I."/>
            <person name="Hermant P."/>
            <person name="Cantrelle F.X."/>
            <person name="Sevin E."/>
            <person name="Culot M."/>
            <person name="Landry V."/>
            <person name="Herledan A."/>
            <person name="Piveteau C."/>
            <person name="Lippens G."/>
            <person name="Leroux F."/>
            <person name="Tang W.J."/>
            <person name="van Endert P."/>
            <person name="Staels B."/>
            <person name="Deprez B."/>
        </authorList>
    </citation>
    <scope>X-RAY CRYSTALLOGRAPHY (2.73 ANGSTROMS) OF 42-1019 IN COMPLEX WITH ZINC AND SYNTHETIC INHIBITOR</scope>
    <scope>FUNCTION</scope>
    <scope>CATALYTIC ACTIVITY</scope>
    <scope>COFACTOR</scope>
    <scope>SUBUNIT</scope>
</reference>
<reference evidence="47 48 49 50 51 52 53 54 55" key="22">
    <citation type="journal article" date="2018" name="Elife">
        <title>Ensemble cryoEM elucidates the mechanism of insulin capture and degradation by human insulin degrading enzyme.</title>
        <authorList>
            <person name="Zhang Z."/>
            <person name="Liang W.G."/>
            <person name="Bailey L.J."/>
            <person name="Tan Y.Z."/>
            <person name="Wei H."/>
            <person name="Wang A."/>
            <person name="Farcasanu M."/>
            <person name="Woods V.A."/>
            <person name="McCord L.A."/>
            <person name="Lee D."/>
            <person name="Shang W."/>
            <person name="Deprez-Poulain R."/>
            <person name="Deprez B."/>
            <person name="Liu D.R."/>
            <person name="Koide A."/>
            <person name="Koide S."/>
            <person name="Kossiakoff A.A."/>
            <person name="Li S."/>
            <person name="Carragher B."/>
            <person name="Potter C.S."/>
            <person name="Tang W.J."/>
        </authorList>
    </citation>
    <scope>STRUCTURE BY ELECTRON MICROSCOPY (3.70 ANGSTROMS) OF 42-1019 IN COMPLEX WITH INSULIN</scope>
    <scope>FUNCTION</scope>
    <scope>SUBUNIT</scope>
    <scope>CATALYTIC ACTIVITY</scope>
</reference>